<sequence>MAGVGPGGYAAEFVPPPECPVFEPSWEEFTDPLSFIGRIRPLAEKTGICKIRPPKDWQPPFACEVKSFRFTPRVQRLNELEAMTRVRLDFLDQLAKFWELQGSTLKIPVVERKILDLYALSKIVASKGGFEMVTKEKKWSKVGSRLGYLPGKGTGSLLKSHYERILYPYELFQSGVSLMGVQMPNLDLKEKVEPEVLSTDTQTSPEPGTRMNILPKRTRRVKTQSESGDVSRNTELKKLQIFGAGPKVVGLAMGTKDKEDEVTRRRKVTNRSDAFNMQMRQRKGTLSVNFVDLYVCMFCGRGNNEDKLLLCDGCDDSYHTFCLIPPLPDVPKGDWRCPKCVAEECSKPREAFGFEQAVREYTLQSFGEMADNFKSDYFNMPVHMVPTELVEKEFWRLVSSIEEDVIVEYGADISSKDFGSGFPVKDGRRKILPEEEEYALSGWNLNNMPVLEQSVLAHINVDISGMKVPWLYVGMCFSSFCWHIEDHWSYSINYLHWGEPKTWYGVPSHAAEQLEEVMRELAPELFESQPDLLHQLVTIMNPNVLMEHGVPVYRTNQCAGEFVVTFPRAYHSGFNQGYNFAEAVNFCTADWLPIGRQCVNHYRRLRRHCVFSHEELIFKMAADPECLDVGLAAMVCKELTLMTEEETRLRESVVQMGVLMSEEEVFELVPDDERQCSACRTTCFLSALTCSCNPERLVCLYHPTDLCPCPMQKKCLRYRYPLEDLPSLLYGVKVRAQSYDTWVSRVTEALSANFNHKKDLIELRVMLEDAEDRKYPENDLFRKLRDAVKEAETCASVAQLLLSKKQKHRQSPDSGRTRTKLTVEELKAFVQQLFSLPCVISQARQVKNLLDDVEEFHERAQEAMMDETPDSSKLQMLIDMGSSLYVELPELPRLKQELQQARWLDEVRLTLSDPQQVTLDVMKKLIDSGVGLAPHHAVEKAMAELQELLTVSERWEEKAKVCLQARPRHSVASLESIVNEAKNIPAFLPNVLSLKEALQKAREWTAKVEAIQSGSNYAYLEQLESLSAKGRPIPVRLEALPQVESQVAAARAWRERTGRTFLKKNSSHTLLQVLSPRTDIGVYGSGKNRRKKVKELIEKEKEKDLDLEPLSDLEEGLEETRDTAMVVAVFKEREQKEIEAMHSLRAANLAKMTMVDRIEEVKFCICRKTASGFMLQCELCKDWFHNSCVPLPKSSSQKKGSSWQAKEVKFLCPLCMRSRRPRLETILSLLVSLQKLPVRLPEGEALQCLTERAMSWQDRARQALATDELSSALAKLSVLSQRMVEQAAREKTEKIISAELQKAAANPDLQGHLPSFQQSAFNRVVSSVSSSPRQTMDYDDEETDSDEDIRETYGYDMKDTASVKSSSSLEPNLFCDEEIPIKSEEVVTHMWTAPSFCAEHAYSSASKSCSQGSSTPRKQPRKSPLVPRSLEPPVLELSPGAKAQLEELMMVGDLLEVSLDETQHIWRILQATHPPSEDRFLHIMEDDSMEEKPLKVKGKDSSEKKRKRKLEKVEQLFGEGKQKSKELKKMDKPRKKKLKLGADKSKELNKLAKKLAKEEERKKKKEKAAAAKVELVKESTEKKREKKVLDIPSKYDWSGAEESDDENAVCAAQNCQRPCKDKVDWVQCDGGCDEWFHQVCVGVSPEMAENEDYICINCAKKQGPVSPGPAPPPSFIMSYKLPMEDLKETS</sequence>
<evidence type="ECO:0000250" key="1"/>
<evidence type="ECO:0000250" key="2">
    <source>
        <dbReference type="UniProtKB" id="Q3UXZ9"/>
    </source>
</evidence>
<evidence type="ECO:0000255" key="3">
    <source>
        <dbReference type="PROSITE-ProRule" id="PRU00146"/>
    </source>
</evidence>
<evidence type="ECO:0000255" key="4">
    <source>
        <dbReference type="PROSITE-ProRule" id="PRU00355"/>
    </source>
</evidence>
<evidence type="ECO:0000255" key="5">
    <source>
        <dbReference type="PROSITE-ProRule" id="PRU00537"/>
    </source>
</evidence>
<evidence type="ECO:0000255" key="6">
    <source>
        <dbReference type="PROSITE-ProRule" id="PRU00538"/>
    </source>
</evidence>
<evidence type="ECO:0000256" key="7">
    <source>
        <dbReference type="SAM" id="MobiDB-lite"/>
    </source>
</evidence>
<evidence type="ECO:0000269" key="8">
    <source>
    </source>
</evidence>
<evidence type="ECO:0000269" key="9">
    <source>
    </source>
</evidence>
<evidence type="ECO:0000269" key="10">
    <source>
    </source>
</evidence>
<evidence type="ECO:0000269" key="11">
    <source>
    </source>
</evidence>
<evidence type="ECO:0000269" key="12">
    <source>
    </source>
</evidence>
<evidence type="ECO:0000269" key="13">
    <source>
    </source>
</evidence>
<evidence type="ECO:0000269" key="14">
    <source>
    </source>
</evidence>
<evidence type="ECO:0000269" key="15">
    <source>
    </source>
</evidence>
<evidence type="ECO:0000269" key="16">
    <source>
    </source>
</evidence>
<evidence type="ECO:0000269" key="17">
    <source>
    </source>
</evidence>
<evidence type="ECO:0000269" key="18">
    <source>
    </source>
</evidence>
<evidence type="ECO:0000269" key="19">
    <source>
    </source>
</evidence>
<evidence type="ECO:0000269" key="20">
    <source>
    </source>
</evidence>
<evidence type="ECO:0000269" key="21">
    <source>
    </source>
</evidence>
<evidence type="ECO:0000269" key="22">
    <source>
    </source>
</evidence>
<evidence type="ECO:0000269" key="23">
    <source>
    </source>
</evidence>
<evidence type="ECO:0000269" key="24">
    <source>
    </source>
</evidence>
<evidence type="ECO:0000269" key="25">
    <source>
    </source>
</evidence>
<evidence type="ECO:0000269" key="26">
    <source>
    </source>
</evidence>
<evidence type="ECO:0000303" key="27">
    <source>
    </source>
</evidence>
<evidence type="ECO:0000303" key="28">
    <source>
    </source>
</evidence>
<evidence type="ECO:0000305" key="29"/>
<evidence type="ECO:0000305" key="30">
    <source>
    </source>
</evidence>
<evidence type="ECO:0000305" key="31">
    <source>
    </source>
</evidence>
<evidence type="ECO:0000305" key="32">
    <source>
    </source>
</evidence>
<evidence type="ECO:0000305" key="33">
    <source>
    </source>
</evidence>
<evidence type="ECO:0000305" key="34">
    <source>
    </source>
</evidence>
<evidence type="ECO:0000305" key="35">
    <source>
    </source>
</evidence>
<evidence type="ECO:0000305" key="36">
    <source>
    </source>
</evidence>
<evidence type="ECO:0000312" key="37">
    <source>
        <dbReference type="HGNC" id="HGNC:9886"/>
    </source>
</evidence>
<evidence type="ECO:0007744" key="38">
    <source>
        <dbReference type="PDB" id="5CEH"/>
    </source>
</evidence>
<evidence type="ECO:0007744" key="39">
    <source>
    </source>
</evidence>
<evidence type="ECO:0007744" key="40">
    <source>
    </source>
</evidence>
<evidence type="ECO:0007744" key="41">
    <source>
    </source>
</evidence>
<evidence type="ECO:0007744" key="42">
    <source>
    </source>
</evidence>
<evidence type="ECO:0007744" key="43">
    <source>
    </source>
</evidence>
<evidence type="ECO:0007744" key="44">
    <source>
    </source>
</evidence>
<evidence type="ECO:0007744" key="45">
    <source>
    </source>
</evidence>
<evidence type="ECO:0007829" key="46">
    <source>
        <dbReference type="PDB" id="3GL6"/>
    </source>
</evidence>
<evidence type="ECO:0007829" key="47">
    <source>
        <dbReference type="PDB" id="5CEH"/>
    </source>
</evidence>
<evidence type="ECO:0007829" key="48">
    <source>
        <dbReference type="PDB" id="5E6H"/>
    </source>
</evidence>
<evidence type="ECO:0007829" key="49">
    <source>
        <dbReference type="PDB" id="5K4L"/>
    </source>
</evidence>
<evidence type="ECO:0007829" key="50">
    <source>
        <dbReference type="PDB" id="5V9P"/>
    </source>
</evidence>
<evidence type="ECO:0007829" key="51">
    <source>
        <dbReference type="PDB" id="5V9T"/>
    </source>
</evidence>
<evidence type="ECO:0007829" key="52">
    <source>
        <dbReference type="PDB" id="6BGV"/>
    </source>
</evidence>
<evidence type="ECO:0007829" key="53">
    <source>
        <dbReference type="PDB" id="6BGY"/>
    </source>
</evidence>
<evidence type="ECO:0007829" key="54">
    <source>
        <dbReference type="PDB" id="6DQ4"/>
    </source>
</evidence>
<evidence type="ECO:0007829" key="55">
    <source>
        <dbReference type="PDB" id="7KLO"/>
    </source>
</evidence>
<evidence type="ECO:0007829" key="56">
    <source>
        <dbReference type="PDB" id="7KLR"/>
    </source>
</evidence>
<accession>P29375</accession>
<accession>A8MV76</accession>
<accession>Q4LE72</accession>
<accession>Q86XZ1</accession>
<organism>
    <name type="scientific">Homo sapiens</name>
    <name type="common">Human</name>
    <dbReference type="NCBI Taxonomy" id="9606"/>
    <lineage>
        <taxon>Eukaryota</taxon>
        <taxon>Metazoa</taxon>
        <taxon>Chordata</taxon>
        <taxon>Craniata</taxon>
        <taxon>Vertebrata</taxon>
        <taxon>Euteleostomi</taxon>
        <taxon>Mammalia</taxon>
        <taxon>Eutheria</taxon>
        <taxon>Euarchontoglires</taxon>
        <taxon>Primates</taxon>
        <taxon>Haplorrhini</taxon>
        <taxon>Catarrhini</taxon>
        <taxon>Hominidae</taxon>
        <taxon>Homo</taxon>
    </lineage>
</organism>
<keyword id="KW-0002">3D-structure</keyword>
<keyword id="KW-0010">Activator</keyword>
<keyword id="KW-0025">Alternative splicing</keyword>
<keyword id="KW-1269">Autism</keyword>
<keyword id="KW-1268">Autism spectrum disorder</keyword>
<keyword id="KW-0090">Biological rhythms</keyword>
<keyword id="KW-0156">Chromatin regulator</keyword>
<keyword id="KW-0160">Chromosomal rearrangement</keyword>
<keyword id="KW-0217">Developmental protein</keyword>
<keyword id="KW-0223">Dioxygenase</keyword>
<keyword id="KW-0991">Intellectual disability</keyword>
<keyword id="KW-0408">Iron</keyword>
<keyword id="KW-1017">Isopeptide bond</keyword>
<keyword id="KW-0479">Metal-binding</keyword>
<keyword id="KW-0539">Nucleus</keyword>
<keyword id="KW-0560">Oxidoreductase</keyword>
<keyword id="KW-0597">Phosphoprotein</keyword>
<keyword id="KW-1267">Proteomics identification</keyword>
<keyword id="KW-1185">Reference proteome</keyword>
<keyword id="KW-0677">Repeat</keyword>
<keyword id="KW-0804">Transcription</keyword>
<keyword id="KW-0805">Transcription regulation</keyword>
<keyword id="KW-0832">Ubl conjugation</keyword>
<keyword id="KW-0862">Zinc</keyword>
<keyword id="KW-0863">Zinc-finger</keyword>
<protein>
    <recommendedName>
        <fullName>Lysine-specific demethylase 5A</fullName>
        <ecNumber evidence="30 31 32">1.14.11.67</ecNumber>
    </recommendedName>
    <alternativeName>
        <fullName>Histone demethylase JARID1A</fullName>
    </alternativeName>
    <alternativeName>
        <fullName>Jumonji/ARID domain-containing protein 1A</fullName>
    </alternativeName>
    <alternativeName>
        <fullName>Retinoblastoma-binding protein 2</fullName>
        <shortName>RBBP-2</shortName>
    </alternativeName>
    <alternativeName>
        <fullName evidence="29">[histone H3]-trimethyl-L-lysine(4) demethylase 5A</fullName>
    </alternativeName>
</protein>
<feature type="chain" id="PRO_0000200584" description="Lysine-specific demethylase 5A">
    <location>
        <begin position="1"/>
        <end position="1690"/>
    </location>
</feature>
<feature type="domain" description="JmjN" evidence="5">
    <location>
        <begin position="19"/>
        <end position="60"/>
    </location>
</feature>
<feature type="domain" description="ARID" evidence="4">
    <location>
        <begin position="84"/>
        <end position="174"/>
    </location>
</feature>
<feature type="domain" description="JmjC" evidence="6">
    <location>
        <begin position="437"/>
        <end position="603"/>
    </location>
</feature>
<feature type="zinc finger region" description="PHD-type 1" evidence="3">
    <location>
        <begin position="293"/>
        <end position="343"/>
    </location>
</feature>
<feature type="zinc finger region" description="C5HC2" evidence="20 22 38">
    <location>
        <begin position="676"/>
        <end position="728"/>
    </location>
</feature>
<feature type="zinc finger region" description="PHD-type 2" evidence="3">
    <location>
        <begin position="1161"/>
        <end position="1218"/>
    </location>
</feature>
<feature type="zinc finger region" description="PHD-type 3" evidence="16">
    <location>
        <begin position="1607"/>
        <end position="1661"/>
    </location>
</feature>
<feature type="region of interest" description="Disordered" evidence="7">
    <location>
        <begin position="1327"/>
        <end position="1348"/>
    </location>
</feature>
<feature type="region of interest" description="Disordered" evidence="7">
    <location>
        <begin position="1407"/>
        <end position="1433"/>
    </location>
</feature>
<feature type="region of interest" description="Disordered" evidence="7">
    <location>
        <begin position="1490"/>
        <end position="1509"/>
    </location>
</feature>
<feature type="region of interest" description="Disordered" evidence="7">
    <location>
        <begin position="1516"/>
        <end position="1543"/>
    </location>
</feature>
<feature type="region of interest" description="Interaction with LMO2" evidence="26">
    <location>
        <begin position="1623"/>
        <end position="1690"/>
    </location>
</feature>
<feature type="short sequence motif" description="GSGFP motif" evidence="2">
    <location>
        <begin position="419"/>
        <end position="423"/>
    </location>
</feature>
<feature type="compositionally biased region" description="Acidic residues" evidence="7">
    <location>
        <begin position="1337"/>
        <end position="1348"/>
    </location>
</feature>
<feature type="compositionally biased region" description="Basic and acidic residues" evidence="7">
    <location>
        <begin position="1490"/>
        <end position="1503"/>
    </location>
</feature>
<feature type="compositionally biased region" description="Basic and acidic residues" evidence="7">
    <location>
        <begin position="1520"/>
        <end position="1530"/>
    </location>
</feature>
<feature type="binding site" evidence="19 21">
    <location>
        <position position="409"/>
    </location>
    <ligand>
        <name>2-oxoglutarate</name>
        <dbReference type="ChEBI" id="CHEBI:16810"/>
    </ligand>
</feature>
<feature type="binding site" evidence="6 33 34 35 36">
    <location>
        <position position="483"/>
    </location>
    <ligand>
        <name>Fe cation</name>
        <dbReference type="ChEBI" id="CHEBI:24875"/>
        <note>catalytic</note>
    </ligand>
</feature>
<feature type="binding site" evidence="33 34 35 36">
    <location>
        <position position="485"/>
    </location>
    <ligand>
        <name>Fe cation</name>
        <dbReference type="ChEBI" id="CHEBI:24875"/>
        <note>catalytic</note>
    </ligand>
</feature>
<feature type="binding site" evidence="19 21">
    <location>
        <position position="491"/>
    </location>
    <ligand>
        <name>2-oxoglutarate</name>
        <dbReference type="ChEBI" id="CHEBI:16810"/>
    </ligand>
</feature>
<feature type="binding site" evidence="19 21">
    <location>
        <position position="493"/>
    </location>
    <ligand>
        <name>2-oxoglutarate</name>
        <dbReference type="ChEBI" id="CHEBI:16810"/>
    </ligand>
</feature>
<feature type="binding site" evidence="19 21">
    <location>
        <position position="501"/>
    </location>
    <ligand>
        <name>2-oxoglutarate</name>
        <dbReference type="ChEBI" id="CHEBI:16810"/>
    </ligand>
</feature>
<feature type="binding site" evidence="6 33 34 35 36">
    <location>
        <position position="571"/>
    </location>
    <ligand>
        <name>Fe cation</name>
        <dbReference type="ChEBI" id="CHEBI:24875"/>
        <note>catalytic</note>
    </ligand>
</feature>
<feature type="site" description="Breakpoint for translocation to form the NUP98-KDM5A fusion protein" evidence="10">
    <location>
        <begin position="1485"/>
        <end position="1486"/>
    </location>
</feature>
<feature type="modified residue" description="Phosphoserine" evidence="43">
    <location>
        <position position="204"/>
    </location>
</feature>
<feature type="modified residue" description="Phosphoserine" evidence="40 41 42 44">
    <location>
        <position position="1111"/>
    </location>
</feature>
<feature type="modified residue" description="Phosphoserine" evidence="43">
    <location>
        <position position="1330"/>
    </location>
</feature>
<feature type="modified residue" description="Phosphoserine" evidence="40">
    <location>
        <position position="1331"/>
    </location>
</feature>
<feature type="modified residue" description="Phosphothreonine" evidence="2">
    <location>
        <position position="1343"/>
    </location>
</feature>
<feature type="modified residue" description="Phosphoserine" evidence="2">
    <location>
        <position position="1345"/>
    </location>
</feature>
<feature type="modified residue" description="Phosphoserine" evidence="43">
    <location>
        <position position="1438"/>
    </location>
</feature>
<feature type="modified residue" description="Phosphoserine" evidence="43">
    <location>
        <position position="1488"/>
    </location>
</feature>
<feature type="modified residue" description="Phosphotyrosine" evidence="2">
    <location>
        <position position="1595"/>
    </location>
</feature>
<feature type="modified residue" description="Phosphoserine" evidence="39">
    <location>
        <position position="1598"/>
    </location>
</feature>
<feature type="modified residue" description="Phosphoserine" evidence="39">
    <location>
        <position position="1603"/>
    </location>
</feature>
<feature type="modified residue" description="Phosphoserine" evidence="43">
    <location>
        <position position="1666"/>
    </location>
</feature>
<feature type="cross-link" description="Glycyl lysine isopeptide (Lys-Gly) (interchain with G-Cter in SUMO2)" evidence="45">
    <location>
        <position position="191"/>
    </location>
</feature>
<feature type="cross-link" description="Glycyl lysine isopeptide (Lys-Gly) (interchain with G-Cter in SUMO2)" evidence="45">
    <location>
        <position position="1007"/>
    </location>
</feature>
<feature type="splice variant" id="VSP_035746" description="In isoform 2." evidence="28">
    <original>VDWVQCDGGCDEWFHQVCVGVSPEMAENEDYICINCAKKQGPVSPGPAPPPSFIMSYKLPMEDLKETS</original>
    <variation>GVVFVTEEERDKKY</variation>
    <location>
        <begin position="1623"/>
        <end position="1690"/>
    </location>
</feature>
<feature type="sequence variant" id="VAR_089688" description="In NEDEHC; uncertain significance; decreased protein expression levels." evidence="23">
    <original>F</original>
    <variation>V</variation>
    <location>
        <position position="477"/>
    </location>
</feature>
<feature type="sequence variant" id="VAR_032984" description="In dbSNP:rs11062385.">
    <original>M</original>
    <variation>T</variation>
    <location>
        <position position="865"/>
    </location>
</feature>
<feature type="sequence variant" id="VAR_032985" description="In dbSNP:rs2229353.">
    <original>P</original>
    <variation>A</variation>
    <location>
        <position position="1190"/>
    </location>
</feature>
<feature type="sequence variant" id="VAR_089689" description="Found in a patient with severe intellectual disability, developmental delay, focal epilepsy, tetraspastic gait, ataxia and behavioral difficulties; uncertain significance." evidence="23">
    <location>
        <begin position="1350"/>
        <end position="1690"/>
    </location>
</feature>
<feature type="sequence variant" id="VAR_089690" description="Found in a patient diagnosed with an autism spectrum disorder, echolalia and intellectual disability; uncertain significance." evidence="23">
    <original>R</original>
    <variation>L</variation>
    <location>
        <position position="1428"/>
    </location>
</feature>
<feature type="mutagenesis site" description="Decreases DNA-binding." evidence="15">
    <original>R</original>
    <variation>E</variation>
    <location>
        <position position="112"/>
    </location>
</feature>
<feature type="mutagenesis site" description="Abolishes DNA-binding." evidence="15">
    <original>K</original>
    <variation>E</variation>
    <location>
        <position position="152"/>
    </location>
</feature>
<feature type="mutagenesis site" description="Decreases DNA-binding." evidence="15">
    <original>S</original>
    <variation>D</variation>
    <location>
        <position position="156"/>
    </location>
</feature>
<feature type="mutagenesis site" description="Decreases DNA-binding." evidence="15">
    <original>L</original>
    <variation>E</variation>
    <location>
        <position position="157"/>
    </location>
</feature>
<feature type="mutagenesis site" description="No effect on lysine-specific histone demethylase activity; when associated with S-636." evidence="21">
    <original>C</original>
    <variation>S</variation>
    <location>
        <position position="626"/>
    </location>
</feature>
<feature type="mutagenesis site" description="No effect on lysine-specific histone demethylase activity; when associated with S-626." evidence="21">
    <original>C</original>
    <variation>S</variation>
    <location>
        <position position="636"/>
    </location>
</feature>
<feature type="mutagenesis site" description="No effect on interaction with histone H3 di- and trimethylated at 'Lys-4'." evidence="16">
    <original>V</original>
    <variation>G</variation>
    <location>
        <position position="1609"/>
    </location>
</feature>
<feature type="mutagenesis site" description="Abolishes interaction with histone H3 di- and trimethylated at 'Lys-4'." evidence="16">
    <original>W</original>
    <variation>A</variation>
    <location>
        <position position="1625"/>
    </location>
</feature>
<feature type="mutagenesis site" description="Abolishes interaction with histone H3 di- and trimethylated at 'Lys-4'." evidence="16">
    <original>EW</original>
    <variation>AA</variation>
    <location>
        <begin position="1634"/>
        <end position="1635"/>
    </location>
</feature>
<feature type="sequence conflict" description="In Ref. 1; AAB28544." evidence="29" ref="1">
    <original>Q</original>
    <variation>QVFFGK</variation>
    <location>
        <position position="1411"/>
    </location>
</feature>
<feature type="sequence conflict" description="In Ref. 1; AAB28544." evidence="29" ref="1">
    <original>E</original>
    <variation>K</variation>
    <location>
        <position position="1547"/>
    </location>
</feature>
<feature type="sequence conflict" description="In Ref. 1; AAB28544." evidence="29" ref="1">
    <original>AQN</original>
    <variation>EPD</variation>
    <location>
        <begin position="1612"/>
        <end position="1614"/>
    </location>
</feature>
<feature type="helix" evidence="53">
    <location>
        <begin position="28"/>
        <end position="30"/>
    </location>
</feature>
<feature type="helix" evidence="53">
    <location>
        <begin position="32"/>
        <end position="43"/>
    </location>
</feature>
<feature type="turn" evidence="53">
    <location>
        <begin position="44"/>
        <end position="46"/>
    </location>
</feature>
<feature type="strand" evidence="53">
    <location>
        <begin position="47"/>
        <end position="51"/>
    </location>
</feature>
<feature type="turn" evidence="53">
    <location>
        <begin position="65"/>
        <end position="67"/>
    </location>
</feature>
<feature type="strand" evidence="53">
    <location>
        <begin position="73"/>
        <end position="76"/>
    </location>
</feature>
<feature type="turn" evidence="53">
    <location>
        <begin position="77"/>
        <end position="82"/>
    </location>
</feature>
<feature type="helix" evidence="50">
    <location>
        <begin position="85"/>
        <end position="100"/>
    </location>
</feature>
<feature type="helix" evidence="50">
    <location>
        <begin position="117"/>
        <end position="126"/>
    </location>
</feature>
<feature type="helix" evidence="50">
    <location>
        <begin position="130"/>
        <end position="136"/>
    </location>
</feature>
<feature type="helix" evidence="50">
    <location>
        <begin position="139"/>
        <end position="145"/>
    </location>
</feature>
<feature type="helix" evidence="50">
    <location>
        <begin position="154"/>
        <end position="173"/>
    </location>
</feature>
<feature type="strand" evidence="50">
    <location>
        <begin position="174"/>
        <end position="176"/>
    </location>
</feature>
<feature type="helix" evidence="51">
    <location>
        <begin position="198"/>
        <end position="201"/>
    </location>
</feature>
<feature type="strand" evidence="55">
    <location>
        <begin position="289"/>
        <end position="291"/>
    </location>
</feature>
<feature type="strand" evidence="56">
    <location>
        <begin position="301"/>
        <end position="304"/>
    </location>
</feature>
<feature type="helix" evidence="55">
    <location>
        <begin position="305"/>
        <end position="307"/>
    </location>
</feature>
<feature type="turn" evidence="56">
    <location>
        <begin position="312"/>
        <end position="314"/>
    </location>
</feature>
<feature type="helix" evidence="55">
    <location>
        <begin position="320"/>
        <end position="322"/>
    </location>
</feature>
<feature type="strand" evidence="56">
    <location>
        <begin position="323"/>
        <end position="326"/>
    </location>
</feature>
<feature type="helix" evidence="55">
    <location>
        <begin position="338"/>
        <end position="342"/>
    </location>
</feature>
<feature type="turn" evidence="54">
    <location>
        <begin position="350"/>
        <end position="353"/>
    </location>
</feature>
<feature type="helix" evidence="53">
    <location>
        <begin position="363"/>
        <end position="378"/>
    </location>
</feature>
<feature type="helix" evidence="53">
    <location>
        <begin position="382"/>
        <end position="384"/>
    </location>
</feature>
<feature type="helix" evidence="53">
    <location>
        <begin position="387"/>
        <end position="399"/>
    </location>
</feature>
<feature type="strand" evidence="48">
    <location>
        <begin position="401"/>
        <end position="403"/>
    </location>
</feature>
<feature type="strand" evidence="53">
    <location>
        <begin position="406"/>
        <end position="414"/>
    </location>
</feature>
<feature type="helix" evidence="53">
    <location>
        <begin position="415"/>
        <end position="418"/>
    </location>
</feature>
<feature type="strand" evidence="53">
    <location>
        <begin position="426"/>
        <end position="429"/>
    </location>
</feature>
<feature type="helix" evidence="53">
    <location>
        <begin position="433"/>
        <end position="435"/>
    </location>
</feature>
<feature type="helix" evidence="53">
    <location>
        <begin position="436"/>
        <end position="440"/>
    </location>
</feature>
<feature type="helix" evidence="53">
    <location>
        <begin position="445"/>
        <end position="447"/>
    </location>
</feature>
<feature type="helix" evidence="50">
    <location>
        <begin position="448"/>
        <end position="450"/>
    </location>
</feature>
<feature type="helix" evidence="53">
    <location>
        <begin position="455"/>
        <end position="459"/>
    </location>
</feature>
<feature type="strand" evidence="51">
    <location>
        <begin position="465"/>
        <end position="468"/>
    </location>
</feature>
<feature type="strand" evidence="53">
    <location>
        <begin position="470"/>
        <end position="474"/>
    </location>
</feature>
<feature type="strand" evidence="53">
    <location>
        <begin position="479"/>
        <end position="483"/>
    </location>
</feature>
<feature type="helix" evidence="53">
    <location>
        <begin position="486"/>
        <end position="488"/>
    </location>
</feature>
<feature type="strand" evidence="53">
    <location>
        <begin position="490"/>
        <end position="499"/>
    </location>
</feature>
<feature type="strand" evidence="53">
    <location>
        <begin position="501"/>
        <end position="506"/>
    </location>
</feature>
<feature type="helix" evidence="53">
    <location>
        <begin position="508"/>
        <end position="510"/>
    </location>
</feature>
<feature type="helix" evidence="53">
    <location>
        <begin position="511"/>
        <end position="521"/>
    </location>
</feature>
<feature type="helix" evidence="53">
    <location>
        <begin position="524"/>
        <end position="526"/>
    </location>
</feature>
<feature type="helix" evidence="53">
    <location>
        <begin position="531"/>
        <end position="534"/>
    </location>
</feature>
<feature type="turn" evidence="52">
    <location>
        <begin position="535"/>
        <end position="537"/>
    </location>
</feature>
<feature type="helix" evidence="53">
    <location>
        <begin position="542"/>
        <end position="547"/>
    </location>
</feature>
<feature type="strand" evidence="53">
    <location>
        <begin position="553"/>
        <end position="557"/>
    </location>
</feature>
<feature type="strand" evidence="53">
    <location>
        <begin position="562"/>
        <end position="565"/>
    </location>
</feature>
<feature type="strand" evidence="53">
    <location>
        <begin position="570"/>
        <end position="586"/>
    </location>
</feature>
<feature type="helix" evidence="50">
    <location>
        <begin position="589"/>
        <end position="591"/>
    </location>
</feature>
<feature type="helix" evidence="50">
    <location>
        <begin position="592"/>
        <end position="604"/>
    </location>
</feature>
<feature type="helix" evidence="50">
    <location>
        <begin position="613"/>
        <end position="621"/>
    </location>
</feature>
<feature type="helix" evidence="50">
    <location>
        <begin position="629"/>
        <end position="655"/>
    </location>
</feature>
<feature type="strand" evidence="49">
    <location>
        <begin position="661"/>
        <end position="663"/>
    </location>
</feature>
<feature type="helix" evidence="50">
    <location>
        <begin position="666"/>
        <end position="668"/>
    </location>
</feature>
<feature type="helix" evidence="50">
    <location>
        <begin position="671"/>
        <end position="673"/>
    </location>
</feature>
<feature type="strand" evidence="51">
    <location>
        <begin position="674"/>
        <end position="676"/>
    </location>
</feature>
<feature type="strand" evidence="50">
    <location>
        <begin position="685"/>
        <end position="688"/>
    </location>
</feature>
<feature type="strand" evidence="50">
    <location>
        <begin position="691"/>
        <end position="693"/>
    </location>
</feature>
<feature type="helix" evidence="47">
    <location>
        <begin position="703"/>
        <end position="705"/>
    </location>
</feature>
<feature type="strand" evidence="47">
    <location>
        <begin position="711"/>
        <end position="713"/>
    </location>
</feature>
<feature type="strand" evidence="50">
    <location>
        <begin position="716"/>
        <end position="720"/>
    </location>
</feature>
<feature type="helix" evidence="50">
    <location>
        <begin position="724"/>
        <end position="743"/>
    </location>
</feature>
<feature type="helix" evidence="50">
    <location>
        <begin position="766"/>
        <end position="772"/>
    </location>
</feature>
<feature type="turn" evidence="50">
    <location>
        <begin position="780"/>
        <end position="784"/>
    </location>
</feature>
<feature type="strand" evidence="46">
    <location>
        <begin position="1620"/>
        <end position="1627"/>
    </location>
</feature>
<feature type="strand" evidence="46">
    <location>
        <begin position="1629"/>
        <end position="1632"/>
    </location>
</feature>
<feature type="strand" evidence="46">
    <location>
        <begin position="1635"/>
        <end position="1637"/>
    </location>
</feature>
<feature type="helix" evidence="46">
    <location>
        <begin position="1639"/>
        <end position="1641"/>
    </location>
</feature>
<feature type="helix" evidence="46">
    <location>
        <begin position="1645"/>
        <end position="1650"/>
    </location>
</feature>
<feature type="turn" evidence="46">
    <location>
        <begin position="1656"/>
        <end position="1658"/>
    </location>
</feature>
<gene>
    <name evidence="37" type="primary">KDM5A</name>
    <name type="synonym">JARID1A</name>
    <name type="synonym">RBBP2</name>
    <name evidence="27" type="synonym">RBP2</name>
</gene>
<dbReference type="EC" id="1.14.11.67" evidence="30 31 32"/>
<dbReference type="EMBL" id="S66431">
    <property type="protein sequence ID" value="AAB28544.1"/>
    <property type="status" value="ALT_FRAME"/>
    <property type="molecule type" value="mRNA"/>
</dbReference>
<dbReference type="EMBL" id="AB209999">
    <property type="protein sequence ID" value="BAE06081.1"/>
    <property type="status" value="ALT_INIT"/>
    <property type="molecule type" value="mRNA"/>
</dbReference>
<dbReference type="EMBL" id="AC005844">
    <property type="status" value="NOT_ANNOTATED_CDS"/>
    <property type="molecule type" value="Genomic_DNA"/>
</dbReference>
<dbReference type="EMBL" id="AC007406">
    <property type="status" value="NOT_ANNOTATED_CDS"/>
    <property type="molecule type" value="Genomic_DNA"/>
</dbReference>
<dbReference type="EMBL" id="BC048307">
    <property type="protein sequence ID" value="AAH48307.1"/>
    <property type="status" value="ALT_TERM"/>
    <property type="molecule type" value="mRNA"/>
</dbReference>
<dbReference type="EMBL" id="BC053893">
    <property type="protein sequence ID" value="AAH53893.1"/>
    <property type="status" value="ALT_TERM"/>
    <property type="molecule type" value="mRNA"/>
</dbReference>
<dbReference type="EMBL" id="BC110916">
    <property type="protein sequence ID" value="AAI10917.1"/>
    <property type="status" value="ALT_TERM"/>
    <property type="molecule type" value="mRNA"/>
</dbReference>
<dbReference type="CCDS" id="CCDS41736.1">
    <molecule id="P29375-1"/>
</dbReference>
<dbReference type="PIR" id="I78879">
    <property type="entry name" value="I78879"/>
</dbReference>
<dbReference type="RefSeq" id="NP_001036068.1">
    <molecule id="P29375-1"/>
    <property type="nucleotide sequence ID" value="NM_001042603.3"/>
</dbReference>
<dbReference type="PDB" id="2JXJ">
    <property type="method" value="NMR"/>
    <property type="chains" value="A=85-175"/>
</dbReference>
<dbReference type="PDB" id="2KGG">
    <property type="method" value="NMR"/>
    <property type="chains" value="A=1609-1659"/>
</dbReference>
<dbReference type="PDB" id="2KGI">
    <property type="method" value="NMR"/>
    <property type="chains" value="A=1609-1659"/>
</dbReference>
<dbReference type="PDB" id="3GL6">
    <property type="method" value="X-ray"/>
    <property type="resolution" value="1.90 A"/>
    <property type="chains" value="A=1609-1659"/>
</dbReference>
<dbReference type="PDB" id="5C11">
    <property type="method" value="X-ray"/>
    <property type="resolution" value="2.80 A"/>
    <property type="chains" value="A=1609-1659"/>
</dbReference>
<dbReference type="PDB" id="5CEH">
    <property type="method" value="X-ray"/>
    <property type="resolution" value="3.14 A"/>
    <property type="chains" value="A=12-797"/>
</dbReference>
<dbReference type="PDB" id="5E6H">
    <property type="method" value="X-ray"/>
    <property type="resolution" value="2.24 A"/>
    <property type="chains" value="A=1-87, A=348-588"/>
</dbReference>
<dbReference type="PDB" id="5ISL">
    <property type="method" value="X-ray"/>
    <property type="resolution" value="1.69 A"/>
    <property type="chains" value="A=1-87, A=348-588"/>
</dbReference>
<dbReference type="PDB" id="5IVB">
    <property type="method" value="X-ray"/>
    <property type="resolution" value="1.39 A"/>
    <property type="chains" value="A=1-87, A=348-588"/>
</dbReference>
<dbReference type="PDB" id="5IVC">
    <property type="method" value="X-ray"/>
    <property type="resolution" value="1.57 A"/>
    <property type="chains" value="A=1-87, A=348-588"/>
</dbReference>
<dbReference type="PDB" id="5IVE">
    <property type="method" value="X-ray"/>
    <property type="resolution" value="1.78 A"/>
    <property type="chains" value="A=1-87, A=348-588"/>
</dbReference>
<dbReference type="PDB" id="5IVF">
    <property type="method" value="X-ray"/>
    <property type="resolution" value="1.68 A"/>
    <property type="chains" value="A=1-87, A=348-588"/>
</dbReference>
<dbReference type="PDB" id="5IVJ">
    <property type="method" value="X-ray"/>
    <property type="resolution" value="1.57 A"/>
    <property type="chains" value="A=1-87, A=348-588"/>
</dbReference>
<dbReference type="PDB" id="5IVV">
    <property type="method" value="X-ray"/>
    <property type="resolution" value="1.85 A"/>
    <property type="chains" value="A=1-87, A=348-588"/>
</dbReference>
<dbReference type="PDB" id="5IVY">
    <property type="method" value="X-ray"/>
    <property type="resolution" value="1.45 A"/>
    <property type="chains" value="A=1-87, A=348-588"/>
</dbReference>
<dbReference type="PDB" id="5IW0">
    <property type="method" value="X-ray"/>
    <property type="resolution" value="1.63 A"/>
    <property type="chains" value="A=1-87, A=348-588"/>
</dbReference>
<dbReference type="PDB" id="5IWF">
    <property type="method" value="X-ray"/>
    <property type="resolution" value="2.29 A"/>
    <property type="chains" value="A=1-87, A=348-588"/>
</dbReference>
<dbReference type="PDB" id="5K4L">
    <property type="method" value="X-ray"/>
    <property type="resolution" value="3.18 A"/>
    <property type="chains" value="A/B=12-797"/>
</dbReference>
<dbReference type="PDB" id="5V9P">
    <property type="method" value="X-ray"/>
    <property type="resolution" value="3.00 A"/>
    <property type="chains" value="A=12-797"/>
</dbReference>
<dbReference type="PDB" id="5V9T">
    <property type="method" value="X-ray"/>
    <property type="resolution" value="3.05 A"/>
    <property type="chains" value="A/B=12-797"/>
</dbReference>
<dbReference type="PDB" id="6BGU">
    <property type="method" value="X-ray"/>
    <property type="resolution" value="1.68 A"/>
    <property type="chains" value="A=1-588"/>
</dbReference>
<dbReference type="PDB" id="6BGV">
    <property type="method" value="X-ray"/>
    <property type="resolution" value="1.59 A"/>
    <property type="chains" value="A=1-588"/>
</dbReference>
<dbReference type="PDB" id="6BGW">
    <property type="method" value="X-ray"/>
    <property type="resolution" value="1.64 A"/>
    <property type="chains" value="A=1-588"/>
</dbReference>
<dbReference type="PDB" id="6BGX">
    <property type="method" value="X-ray"/>
    <property type="resolution" value="1.88 A"/>
    <property type="chains" value="A=1-588"/>
</dbReference>
<dbReference type="PDB" id="6BGY">
    <property type="method" value="X-ray"/>
    <property type="resolution" value="1.22 A"/>
    <property type="chains" value="A=1-588"/>
</dbReference>
<dbReference type="PDB" id="6BGZ">
    <property type="method" value="X-ray"/>
    <property type="resolution" value="1.69 A"/>
    <property type="chains" value="A=1-588"/>
</dbReference>
<dbReference type="PDB" id="6BH0">
    <property type="method" value="X-ray"/>
    <property type="resolution" value="1.99 A"/>
    <property type="chains" value="A=1-588"/>
</dbReference>
<dbReference type="PDB" id="6BH1">
    <property type="method" value="X-ray"/>
    <property type="resolution" value="1.93 A"/>
    <property type="chains" value="A=1-588"/>
</dbReference>
<dbReference type="PDB" id="6BH2">
    <property type="method" value="X-ray"/>
    <property type="resolution" value="1.45 A"/>
    <property type="chains" value="A=1-588"/>
</dbReference>
<dbReference type="PDB" id="6BH3">
    <property type="method" value="X-ray"/>
    <property type="resolution" value="1.70 A"/>
    <property type="chains" value="A=1-588"/>
</dbReference>
<dbReference type="PDB" id="6BH4">
    <property type="method" value="X-ray"/>
    <property type="resolution" value="2.05 A"/>
    <property type="chains" value="A=1-588"/>
</dbReference>
<dbReference type="PDB" id="6BH5">
    <property type="method" value="X-ray"/>
    <property type="resolution" value="1.65 A"/>
    <property type="chains" value="A=1-588"/>
</dbReference>
<dbReference type="PDB" id="6DQ4">
    <property type="method" value="X-ray"/>
    <property type="resolution" value="1.39 A"/>
    <property type="chains" value="A=1-588"/>
</dbReference>
<dbReference type="PDB" id="6DQ5">
    <property type="method" value="X-ray"/>
    <property type="resolution" value="1.89 A"/>
    <property type="chains" value="A=1-588"/>
</dbReference>
<dbReference type="PDB" id="6DQ6">
    <property type="method" value="X-ray"/>
    <property type="resolution" value="1.59 A"/>
    <property type="chains" value="A=1-588"/>
</dbReference>
<dbReference type="PDB" id="6DQ7">
    <property type="method" value="X-ray"/>
    <property type="resolution" value="1.85 A"/>
    <property type="chains" value="A=1-588"/>
</dbReference>
<dbReference type="PDB" id="6DQ8">
    <property type="method" value="X-ray"/>
    <property type="resolution" value="1.46 A"/>
    <property type="chains" value="A=1-588"/>
</dbReference>
<dbReference type="PDB" id="6DQ9">
    <property type="method" value="X-ray"/>
    <property type="resolution" value="1.75 A"/>
    <property type="chains" value="A=1-588"/>
</dbReference>
<dbReference type="PDB" id="6DQA">
    <property type="method" value="X-ray"/>
    <property type="resolution" value="1.89 A"/>
    <property type="chains" value="A=1-588"/>
</dbReference>
<dbReference type="PDB" id="6DQB">
    <property type="method" value="X-ray"/>
    <property type="resolution" value="1.79 A"/>
    <property type="chains" value="A=1-588"/>
</dbReference>
<dbReference type="PDB" id="6DQC">
    <property type="method" value="X-ray"/>
    <property type="resolution" value="1.75 A"/>
    <property type="chains" value="A=1-588"/>
</dbReference>
<dbReference type="PDB" id="6DQD">
    <property type="method" value="X-ray"/>
    <property type="resolution" value="1.99 A"/>
    <property type="chains" value="A=1-588"/>
</dbReference>
<dbReference type="PDB" id="6DQE">
    <property type="method" value="X-ray"/>
    <property type="resolution" value="1.69 A"/>
    <property type="chains" value="A=1-588"/>
</dbReference>
<dbReference type="PDB" id="6DQF">
    <property type="method" value="X-ray"/>
    <property type="resolution" value="1.69 A"/>
    <property type="chains" value="A=1-588"/>
</dbReference>
<dbReference type="PDB" id="7KLO">
    <property type="method" value="NMR"/>
    <property type="chains" value="A=287-344"/>
</dbReference>
<dbReference type="PDB" id="7KLR">
    <property type="method" value="NMR"/>
    <property type="chains" value="A=287-344"/>
</dbReference>
<dbReference type="PDBsum" id="2JXJ"/>
<dbReference type="PDBsum" id="2KGG"/>
<dbReference type="PDBsum" id="2KGI"/>
<dbReference type="PDBsum" id="3GL6"/>
<dbReference type="PDBsum" id="5C11"/>
<dbReference type="PDBsum" id="5CEH"/>
<dbReference type="PDBsum" id="5E6H"/>
<dbReference type="PDBsum" id="5ISL"/>
<dbReference type="PDBsum" id="5IVB"/>
<dbReference type="PDBsum" id="5IVC"/>
<dbReference type="PDBsum" id="5IVE"/>
<dbReference type="PDBsum" id="5IVF"/>
<dbReference type="PDBsum" id="5IVJ"/>
<dbReference type="PDBsum" id="5IVV"/>
<dbReference type="PDBsum" id="5IVY"/>
<dbReference type="PDBsum" id="5IW0"/>
<dbReference type="PDBsum" id="5IWF"/>
<dbReference type="PDBsum" id="5K4L"/>
<dbReference type="PDBsum" id="5V9P"/>
<dbReference type="PDBsum" id="5V9T"/>
<dbReference type="PDBsum" id="6BGU"/>
<dbReference type="PDBsum" id="6BGV"/>
<dbReference type="PDBsum" id="6BGW"/>
<dbReference type="PDBsum" id="6BGX"/>
<dbReference type="PDBsum" id="6BGY"/>
<dbReference type="PDBsum" id="6BGZ"/>
<dbReference type="PDBsum" id="6BH0"/>
<dbReference type="PDBsum" id="6BH1"/>
<dbReference type="PDBsum" id="6BH2"/>
<dbReference type="PDBsum" id="6BH3"/>
<dbReference type="PDBsum" id="6BH4"/>
<dbReference type="PDBsum" id="6BH5"/>
<dbReference type="PDBsum" id="6DQ4"/>
<dbReference type="PDBsum" id="6DQ5"/>
<dbReference type="PDBsum" id="6DQ6"/>
<dbReference type="PDBsum" id="6DQ7"/>
<dbReference type="PDBsum" id="6DQ8"/>
<dbReference type="PDBsum" id="6DQ9"/>
<dbReference type="PDBsum" id="6DQA"/>
<dbReference type="PDBsum" id="6DQB"/>
<dbReference type="PDBsum" id="6DQC"/>
<dbReference type="PDBsum" id="6DQD"/>
<dbReference type="PDBsum" id="6DQE"/>
<dbReference type="PDBsum" id="6DQF"/>
<dbReference type="PDBsum" id="7KLO"/>
<dbReference type="PDBsum" id="7KLR"/>
<dbReference type="BMRB" id="P29375"/>
<dbReference type="SMR" id="P29375"/>
<dbReference type="BioGRID" id="111862">
    <property type="interactions" value="72"/>
</dbReference>
<dbReference type="DIP" id="DIP-472N"/>
<dbReference type="FunCoup" id="P29375">
    <property type="interactions" value="4320"/>
</dbReference>
<dbReference type="IntAct" id="P29375">
    <property type="interactions" value="38"/>
</dbReference>
<dbReference type="MINT" id="P29375"/>
<dbReference type="STRING" id="9606.ENSP00000382688"/>
<dbReference type="BindingDB" id="P29375"/>
<dbReference type="ChEMBL" id="CHEMBL2424504"/>
<dbReference type="DrugCentral" id="P29375"/>
<dbReference type="GuidetoPHARMACOLOGY" id="2680"/>
<dbReference type="GlyGen" id="P29375">
    <property type="glycosylation" value="1 site, 1 O-linked glycan (1 site)"/>
</dbReference>
<dbReference type="iPTMnet" id="P29375"/>
<dbReference type="PhosphoSitePlus" id="P29375"/>
<dbReference type="SwissPalm" id="P29375"/>
<dbReference type="BioMuta" id="KDM5A"/>
<dbReference type="DMDM" id="215274124"/>
<dbReference type="jPOST" id="P29375"/>
<dbReference type="MassIVE" id="P29375"/>
<dbReference type="PaxDb" id="9606-ENSP00000382688"/>
<dbReference type="PeptideAtlas" id="P29375"/>
<dbReference type="ProteomicsDB" id="54559">
    <molecule id="P29375-1"/>
</dbReference>
<dbReference type="ProteomicsDB" id="54560">
    <molecule id="P29375-2"/>
</dbReference>
<dbReference type="Pumba" id="P29375"/>
<dbReference type="Antibodypedia" id="1751">
    <property type="antibodies" value="233 antibodies from 28 providers"/>
</dbReference>
<dbReference type="DNASU" id="5927"/>
<dbReference type="Ensembl" id="ENST00000399788.7">
    <molecule id="P29375-1"/>
    <property type="protein sequence ID" value="ENSP00000382688.2"/>
    <property type="gene ID" value="ENSG00000073614.13"/>
</dbReference>
<dbReference type="GeneID" id="5927"/>
<dbReference type="KEGG" id="hsa:5927"/>
<dbReference type="MANE-Select" id="ENST00000399788.7">
    <property type="protein sequence ID" value="ENSP00000382688.2"/>
    <property type="RefSeq nucleotide sequence ID" value="NM_001042603.3"/>
    <property type="RefSeq protein sequence ID" value="NP_001036068.1"/>
</dbReference>
<dbReference type="UCSC" id="uc001qif.3">
    <molecule id="P29375-1"/>
    <property type="organism name" value="human"/>
</dbReference>
<dbReference type="AGR" id="HGNC:9886"/>
<dbReference type="CTD" id="5927"/>
<dbReference type="DisGeNET" id="5927"/>
<dbReference type="GeneCards" id="KDM5A"/>
<dbReference type="HGNC" id="HGNC:9886">
    <property type="gene designation" value="KDM5A"/>
</dbReference>
<dbReference type="HPA" id="ENSG00000073614">
    <property type="expression patterns" value="Tissue enhanced (bone)"/>
</dbReference>
<dbReference type="MalaCards" id="KDM5A"/>
<dbReference type="MIM" id="180202">
    <property type="type" value="gene"/>
</dbReference>
<dbReference type="MIM" id="620820">
    <property type="type" value="phenotype"/>
</dbReference>
<dbReference type="neXtProt" id="NX_P29375"/>
<dbReference type="OpenTargets" id="ENSG00000073614"/>
<dbReference type="PharmGKB" id="PA34250"/>
<dbReference type="VEuPathDB" id="HostDB:ENSG00000073614"/>
<dbReference type="eggNOG" id="KOG1246">
    <property type="taxonomic scope" value="Eukaryota"/>
</dbReference>
<dbReference type="GeneTree" id="ENSGT00940000157170"/>
<dbReference type="HOGENOM" id="CLU_000991_2_0_1"/>
<dbReference type="InParanoid" id="P29375"/>
<dbReference type="OMA" id="GFDQVCK"/>
<dbReference type="OrthoDB" id="1678912at2759"/>
<dbReference type="PAN-GO" id="P29375">
    <property type="GO annotations" value="3 GO annotations based on evolutionary models"/>
</dbReference>
<dbReference type="PhylomeDB" id="P29375"/>
<dbReference type="TreeFam" id="TF106476"/>
<dbReference type="BioCyc" id="MetaCyc:ENSG00000073614-MONOMER"/>
<dbReference type="BRENDA" id="1.14.11.67">
    <property type="organism ID" value="2681"/>
</dbReference>
<dbReference type="PathwayCommons" id="P29375"/>
<dbReference type="Reactome" id="R-HSA-3214842">
    <property type="pathway name" value="HDMs demethylate histones"/>
</dbReference>
<dbReference type="Reactome" id="R-HSA-9821002">
    <property type="pathway name" value="Chromatin modifications during the maternal to zygotic transition (MZT)"/>
</dbReference>
<dbReference type="SignaLink" id="P29375"/>
<dbReference type="SIGNOR" id="P29375"/>
<dbReference type="BioGRID-ORCS" id="5927">
    <property type="hits" value="19 hits in 1206 CRISPR screens"/>
</dbReference>
<dbReference type="CD-CODE" id="91857CE7">
    <property type="entry name" value="Nucleolus"/>
</dbReference>
<dbReference type="ChiTaRS" id="KDM5A">
    <property type="organism name" value="human"/>
</dbReference>
<dbReference type="EvolutionaryTrace" id="P29375"/>
<dbReference type="GeneWiki" id="JARID1A"/>
<dbReference type="GenomeRNAi" id="5927"/>
<dbReference type="Pharos" id="P29375">
    <property type="development level" value="Tchem"/>
</dbReference>
<dbReference type="PRO" id="PR:P29375"/>
<dbReference type="Proteomes" id="UP000005640">
    <property type="component" value="Chromosome 12"/>
</dbReference>
<dbReference type="RNAct" id="P29375">
    <property type="molecule type" value="protein"/>
</dbReference>
<dbReference type="Bgee" id="ENSG00000073614">
    <property type="expression patterns" value="Expressed in colonic epithelium and 206 other cell types or tissues"/>
</dbReference>
<dbReference type="ExpressionAtlas" id="P29375">
    <property type="expression patterns" value="baseline and differential"/>
</dbReference>
<dbReference type="GO" id="GO:0000785">
    <property type="term" value="C:chromatin"/>
    <property type="evidence" value="ECO:0000318"/>
    <property type="project" value="GO_Central"/>
</dbReference>
<dbReference type="GO" id="GO:0005730">
    <property type="term" value="C:nucleolus"/>
    <property type="evidence" value="ECO:0007669"/>
    <property type="project" value="UniProtKB-SubCell"/>
</dbReference>
<dbReference type="GO" id="GO:0005654">
    <property type="term" value="C:nucleoplasm"/>
    <property type="evidence" value="ECO:0000304"/>
    <property type="project" value="Reactome"/>
</dbReference>
<dbReference type="GO" id="GO:0005634">
    <property type="term" value="C:nucleus"/>
    <property type="evidence" value="ECO:0000314"/>
    <property type="project" value="CAFA"/>
</dbReference>
<dbReference type="GO" id="GO:0032993">
    <property type="term" value="C:protein-DNA complex"/>
    <property type="evidence" value="ECO:0007669"/>
    <property type="project" value="Ensembl"/>
</dbReference>
<dbReference type="GO" id="GO:0031490">
    <property type="term" value="F:chromatin DNA binding"/>
    <property type="evidence" value="ECO:0007669"/>
    <property type="project" value="Ensembl"/>
</dbReference>
<dbReference type="GO" id="GO:0003677">
    <property type="term" value="F:DNA binding"/>
    <property type="evidence" value="ECO:0000314"/>
    <property type="project" value="GDB"/>
</dbReference>
<dbReference type="GO" id="GO:0004857">
    <property type="term" value="F:enzyme inhibitor activity"/>
    <property type="evidence" value="ECO:0000250"/>
    <property type="project" value="UniProtKB"/>
</dbReference>
<dbReference type="GO" id="GO:0042393">
    <property type="term" value="F:histone binding"/>
    <property type="evidence" value="ECO:0000314"/>
    <property type="project" value="UniProtKB"/>
</dbReference>
<dbReference type="GO" id="GO:0032452">
    <property type="term" value="F:histone demethylase activity"/>
    <property type="evidence" value="ECO:0000304"/>
    <property type="project" value="Reactome"/>
</dbReference>
<dbReference type="GO" id="GO:0034647">
    <property type="term" value="F:histone H3K4me/H3K4me2/H3K4me3 demethylase activity"/>
    <property type="evidence" value="ECO:0000314"/>
    <property type="project" value="CAFA"/>
</dbReference>
<dbReference type="GO" id="GO:0000976">
    <property type="term" value="F:transcription cis-regulatory region binding"/>
    <property type="evidence" value="ECO:0000315"/>
    <property type="project" value="CAFA"/>
</dbReference>
<dbReference type="GO" id="GO:0003713">
    <property type="term" value="F:transcription coactivator activity"/>
    <property type="evidence" value="ECO:0000250"/>
    <property type="project" value="UniProtKB"/>
</dbReference>
<dbReference type="GO" id="GO:0008270">
    <property type="term" value="F:zinc ion binding"/>
    <property type="evidence" value="ECO:0000314"/>
    <property type="project" value="UniProtKB"/>
</dbReference>
<dbReference type="GO" id="GO:0006338">
    <property type="term" value="P:chromatin remodeling"/>
    <property type="evidence" value="ECO:0000318"/>
    <property type="project" value="GO_Central"/>
</dbReference>
<dbReference type="GO" id="GO:0032922">
    <property type="term" value="P:circadian regulation of gene expression"/>
    <property type="evidence" value="ECO:0000250"/>
    <property type="project" value="UniProtKB"/>
</dbReference>
<dbReference type="GO" id="GO:0140718">
    <property type="term" value="P:facultative heterochromatin formation"/>
    <property type="evidence" value="ECO:0007669"/>
    <property type="project" value="Ensembl"/>
</dbReference>
<dbReference type="GO" id="GO:0000122">
    <property type="term" value="P:negative regulation of transcription by RNA polymerase II"/>
    <property type="evidence" value="ECO:0007669"/>
    <property type="project" value="Ensembl"/>
</dbReference>
<dbReference type="GO" id="GO:0045893">
    <property type="term" value="P:positive regulation of DNA-templated transcription"/>
    <property type="evidence" value="ECO:0000314"/>
    <property type="project" value="UniProtKB"/>
</dbReference>
<dbReference type="GO" id="GO:0051090">
    <property type="term" value="P:regulation of DNA-binding transcription factor activity"/>
    <property type="evidence" value="ECO:0000315"/>
    <property type="project" value="CAFA"/>
</dbReference>
<dbReference type="GO" id="GO:0006355">
    <property type="term" value="P:regulation of DNA-templated transcription"/>
    <property type="evidence" value="ECO:0000318"/>
    <property type="project" value="GO_Central"/>
</dbReference>
<dbReference type="CDD" id="cd16873">
    <property type="entry name" value="ARID_KDM5A"/>
    <property type="match status" value="1"/>
</dbReference>
<dbReference type="CDD" id="cd15602">
    <property type="entry name" value="PHD1_KDM5A"/>
    <property type="match status" value="1"/>
</dbReference>
<dbReference type="CDD" id="cd15606">
    <property type="entry name" value="PHD2_KDM5A"/>
    <property type="match status" value="1"/>
</dbReference>
<dbReference type="CDD" id="cd15686">
    <property type="entry name" value="PHD3_KDM5A"/>
    <property type="match status" value="1"/>
</dbReference>
<dbReference type="DisProt" id="DP02224"/>
<dbReference type="FunFam" id="3.30.40.10:FF:000023">
    <property type="entry name" value="Lysine (K)-specific demethylase 5A"/>
    <property type="match status" value="1"/>
</dbReference>
<dbReference type="FunFam" id="3.30.40.10:FF:000368">
    <property type="entry name" value="Lysine demethylase 5A"/>
    <property type="match status" value="1"/>
</dbReference>
<dbReference type="FunFam" id="3.30.40.10:FF:000613">
    <property type="entry name" value="lysine-specific demethylase 5A"/>
    <property type="match status" value="1"/>
</dbReference>
<dbReference type="FunFam" id="2.60.120.650:FF:000035">
    <property type="entry name" value="PHD transcription factor Rum1"/>
    <property type="match status" value="1"/>
</dbReference>
<dbReference type="FunFam" id="1.10.150.60:FF:000001">
    <property type="entry name" value="Putative lysine-specific demethylase 5b"/>
    <property type="match status" value="1"/>
</dbReference>
<dbReference type="FunFam" id="2.60.120.650:FF:000001">
    <property type="entry name" value="Putative lysine-specific demethylase 5b"/>
    <property type="match status" value="1"/>
</dbReference>
<dbReference type="Gene3D" id="1.10.150.60">
    <property type="entry name" value="ARID DNA-binding domain"/>
    <property type="match status" value="1"/>
</dbReference>
<dbReference type="Gene3D" id="2.60.120.650">
    <property type="entry name" value="Cupin"/>
    <property type="match status" value="1"/>
</dbReference>
<dbReference type="Gene3D" id="3.30.40.10">
    <property type="entry name" value="Zinc/RING finger domain, C3HC4 (zinc finger)"/>
    <property type="match status" value="3"/>
</dbReference>
<dbReference type="InterPro" id="IPR001606">
    <property type="entry name" value="ARID_dom"/>
</dbReference>
<dbReference type="InterPro" id="IPR036431">
    <property type="entry name" value="ARID_dom_sf"/>
</dbReference>
<dbReference type="InterPro" id="IPR003347">
    <property type="entry name" value="JmjC_dom"/>
</dbReference>
<dbReference type="InterPro" id="IPR003349">
    <property type="entry name" value="JmjN"/>
</dbReference>
<dbReference type="InterPro" id="IPR048615">
    <property type="entry name" value="KDM5_C-hel"/>
</dbReference>
<dbReference type="InterPro" id="IPR047974">
    <property type="entry name" value="KDM5A_ARID"/>
</dbReference>
<dbReference type="InterPro" id="IPR047973">
    <property type="entry name" value="KDM5A_PHD1"/>
</dbReference>
<dbReference type="InterPro" id="IPR047970">
    <property type="entry name" value="KDM5A_PHD2"/>
</dbReference>
<dbReference type="InterPro" id="IPR047972">
    <property type="entry name" value="KDM5A_PHD3"/>
</dbReference>
<dbReference type="InterPro" id="IPR013637">
    <property type="entry name" value="Lys_sp_deMease-like_dom"/>
</dbReference>
<dbReference type="InterPro" id="IPR019786">
    <property type="entry name" value="Zinc_finger_PHD-type_CS"/>
</dbReference>
<dbReference type="InterPro" id="IPR004198">
    <property type="entry name" value="Znf_C5HC2"/>
</dbReference>
<dbReference type="InterPro" id="IPR011011">
    <property type="entry name" value="Znf_FYVE_PHD"/>
</dbReference>
<dbReference type="InterPro" id="IPR001965">
    <property type="entry name" value="Znf_PHD"/>
</dbReference>
<dbReference type="InterPro" id="IPR019787">
    <property type="entry name" value="Znf_PHD-finger"/>
</dbReference>
<dbReference type="InterPro" id="IPR013083">
    <property type="entry name" value="Znf_RING/FYVE/PHD"/>
</dbReference>
<dbReference type="PANTHER" id="PTHR10694">
    <property type="entry name" value="LYSINE-SPECIFIC DEMETHYLASE"/>
    <property type="match status" value="1"/>
</dbReference>
<dbReference type="PANTHER" id="PTHR10694:SF17">
    <property type="entry name" value="LYSINE-SPECIFIC DEMETHYLASE 5A"/>
    <property type="match status" value="1"/>
</dbReference>
<dbReference type="Pfam" id="PF01388">
    <property type="entry name" value="ARID"/>
    <property type="match status" value="1"/>
</dbReference>
<dbReference type="Pfam" id="PF02373">
    <property type="entry name" value="JmjC"/>
    <property type="match status" value="1"/>
</dbReference>
<dbReference type="Pfam" id="PF02375">
    <property type="entry name" value="JmjN"/>
    <property type="match status" value="1"/>
</dbReference>
<dbReference type="Pfam" id="PF21323">
    <property type="entry name" value="KDM5_C-hel"/>
    <property type="match status" value="1"/>
</dbReference>
<dbReference type="Pfam" id="PF00628">
    <property type="entry name" value="PHD"/>
    <property type="match status" value="2"/>
</dbReference>
<dbReference type="Pfam" id="PF08429">
    <property type="entry name" value="PLU-1"/>
    <property type="match status" value="1"/>
</dbReference>
<dbReference type="Pfam" id="PF02928">
    <property type="entry name" value="zf-C5HC2"/>
    <property type="match status" value="1"/>
</dbReference>
<dbReference type="SMART" id="SM01014">
    <property type="entry name" value="ARID"/>
    <property type="match status" value="1"/>
</dbReference>
<dbReference type="SMART" id="SM00501">
    <property type="entry name" value="BRIGHT"/>
    <property type="match status" value="1"/>
</dbReference>
<dbReference type="SMART" id="SM00558">
    <property type="entry name" value="JmjC"/>
    <property type="match status" value="1"/>
</dbReference>
<dbReference type="SMART" id="SM00545">
    <property type="entry name" value="JmjN"/>
    <property type="match status" value="1"/>
</dbReference>
<dbReference type="SMART" id="SM00249">
    <property type="entry name" value="PHD"/>
    <property type="match status" value="3"/>
</dbReference>
<dbReference type="SUPFAM" id="SSF46774">
    <property type="entry name" value="ARID-like"/>
    <property type="match status" value="1"/>
</dbReference>
<dbReference type="SUPFAM" id="SSF51197">
    <property type="entry name" value="Clavaminate synthase-like"/>
    <property type="match status" value="1"/>
</dbReference>
<dbReference type="SUPFAM" id="SSF57903">
    <property type="entry name" value="FYVE/PHD zinc finger"/>
    <property type="match status" value="3"/>
</dbReference>
<dbReference type="PROSITE" id="PS51011">
    <property type="entry name" value="ARID"/>
    <property type="match status" value="1"/>
</dbReference>
<dbReference type="PROSITE" id="PS51184">
    <property type="entry name" value="JMJC"/>
    <property type="match status" value="1"/>
</dbReference>
<dbReference type="PROSITE" id="PS51183">
    <property type="entry name" value="JMJN"/>
    <property type="match status" value="1"/>
</dbReference>
<dbReference type="PROSITE" id="PS01359">
    <property type="entry name" value="ZF_PHD_1"/>
    <property type="match status" value="2"/>
</dbReference>
<dbReference type="PROSITE" id="PS50016">
    <property type="entry name" value="ZF_PHD_2"/>
    <property type="match status" value="3"/>
</dbReference>
<comment type="function">
    <text evidence="2 8 9 12 13 14 15 16 21">Histone demethylase that specifically demethylates 'Lys-4' of histone H3, thereby playing a central role in histone code. Does not demethylate histone H3 'Lys-9', H3 'Lys-27', H3 'Lys-36', H3 'Lys-79' or H4 'Lys-20'. Demethylates trimethylated and dimethylated but not monomethylated H3 'Lys-4'. Regulates specific gene transcription through DNA-binding on 5'-CCGCCC-3' motif (PubMed:18270511). May stimulate transcription mediated by nuclear receptors. Involved in transcriptional regulation of Hox proteins during cell differentiation (PubMed:19430464). May participate in transcriptional repression of cytokines such as CXCL12. Plays a role in the regulation of the circadian rhythm and in maintaining the normal periodicity of the circadian clock. In a histone demethylase-independent manner, acts as a coactivator of the CLOCK-BMAL1-mediated transcriptional activation of PER1/2 and other clock-controlled genes and increases histone acetylation at PER1/2 promoters by inhibiting the activity of HDAC1 (By similarity). Seems to act as a transcriptional corepressor for some genes such as MT1F and to favor the proliferation of cancer cells (PubMed:27427228).</text>
</comment>
<comment type="catalytic activity">
    <reaction evidence="30 31 32">
        <text>N(6),N(6),N(6)-trimethyl-L-lysyl(4)-[histone H3] + 3 2-oxoglutarate + 3 O2 = L-lysyl(4)-[histone H3] + 3 formaldehyde + 3 succinate + 3 CO2</text>
        <dbReference type="Rhea" id="RHEA:60208"/>
        <dbReference type="Rhea" id="RHEA-COMP:15537"/>
        <dbReference type="Rhea" id="RHEA-COMP:15547"/>
        <dbReference type="ChEBI" id="CHEBI:15379"/>
        <dbReference type="ChEBI" id="CHEBI:16526"/>
        <dbReference type="ChEBI" id="CHEBI:16810"/>
        <dbReference type="ChEBI" id="CHEBI:16842"/>
        <dbReference type="ChEBI" id="CHEBI:29969"/>
        <dbReference type="ChEBI" id="CHEBI:30031"/>
        <dbReference type="ChEBI" id="CHEBI:61961"/>
        <dbReference type="EC" id="1.14.11.67"/>
    </reaction>
</comment>
<comment type="cofactor">
    <cofactor evidence="1">
        <name>Fe(2+)</name>
        <dbReference type="ChEBI" id="CHEBI:29033"/>
    </cofactor>
    <text evidence="1">Binds 1 Fe(2+) ion per subunit.</text>
</comment>
<comment type="activity regulation">
    <text evidence="20 21">The inhibitors KDOAM-25, CPI-455 and others inhibits its demethylase activity, resulting to cell growth arrest in cancer cells.</text>
</comment>
<comment type="biophysicochemical properties">
    <kinetics>
        <KM evidence="21">9 uM for 2-oxoglutarate</KM>
        <KM evidence="21">2.9 uM for histone H3K4me3</KM>
        <text evidence="21">kcat is 2.1 min(-1) and 1.9 min(-1) for 2-oxoglutarate and histone H3K4me3, respectively.</text>
    </kinetics>
</comment>
<comment type="subunit">
    <text evidence="2 8 9 11 16 17 24 25 26">Interacts with SUZ12; the interaction is direct (By similarity). Interacts with the viral protein-binding domain of RB1. Interacts with ESR1, MYC, MYCN and LMO2. Interacts with HDAC1; this interaction impairs histone deacetylation by HDAC1 (By similarity). Interacts with BMAL1 and CLOCK. Interacts (via PHD-type 1 zinc finger) with histone H3 unmodified at 'Lys-4' and (via PHD-type 3 zinc finger) with histone H3 di- and trimethylated at 'Lys-4' (PubMed:19430464).</text>
</comment>
<comment type="interaction">
    <interactant intactId="EBI-1560836">
        <id>P29375</id>
    </interactant>
    <interactant intactId="EBI-491274">
        <id>P06400</id>
        <label>RB1</label>
    </interactant>
    <organismsDiffer>false</organismsDiffer>
    <experiments>2</experiments>
</comment>
<comment type="subcellular location">
    <subcellularLocation>
        <location evidence="9 24">Nucleus</location>
        <location evidence="9 24">Nucleolus</location>
    </subcellularLocation>
    <subcellularLocation>
        <location evidence="2">Nucleus</location>
    </subcellularLocation>
    <text evidence="2">Occupies promoters of genes involved in RNA metabolism and mitochondrial function.</text>
</comment>
<comment type="alternative products">
    <event type="alternative splicing"/>
    <isoform>
        <id>P29375-1</id>
        <name>1</name>
        <sequence type="displayed"/>
    </isoform>
    <isoform>
        <id>P29375-2</id>
        <name>2</name>
        <sequence type="described" ref="VSP_035746"/>
    </isoform>
</comment>
<comment type="domain">
    <text evidence="2 15 16">The GSGFP motif is required for the interaction with SUZ12 (By similarity). The ARID domain specifically binds to the CCGCCC motif and is required for the lysine-specific histone demethylase activity (PubMed:18270511). The PHD-type 3 zinc finger is required for the interaction with histone H3 di- and trimethylated at 'Lys-4' (PubMed:19430464).</text>
</comment>
<comment type="disease">
    <text evidence="18">A chromosomal aberration involving KDM5A has been found in M5 type acute myeloid leukemia. Translocation t(11;12)(p15;p13) with NUP98.</text>
</comment>
<comment type="disease">
    <text evidence="10 18">Chromosomal aberrations involving KDM5A have been found in M7 type childhood acute myeloid leukemia. Translocation t(11;12)(p15;p13) with NUP98.</text>
</comment>
<comment type="disease" evidence="23">
    <disease id="DI-06902">
        <name>El Hayek-Chahrour neurodevelopmental syndrome</name>
        <acronym>NEDEHC</acronym>
        <description>An autosomal recessive neurodevelopmental disorder characterized by lack of speech, intellectual disability, autism, and developmental delay.</description>
        <dbReference type="MIM" id="620820"/>
    </disease>
    <text>The disease may be caused by variants affecting the gene represented in this entry.</text>
</comment>
<comment type="similarity">
    <text evidence="29">Belongs to the JARID1 histone demethylase family.</text>
</comment>
<comment type="sequence caution" evidence="29">
    <conflict type="frameshift">
        <sequence resource="EMBL-CDS" id="AAB28544"/>
    </conflict>
</comment>
<comment type="sequence caution" evidence="29">
    <conflict type="erroneous initiation">
        <sequence resource="EMBL-CDS" id="BAE06081"/>
    </conflict>
    <text>Extended N-terminus.</text>
</comment>
<comment type="online information" name="Atlas of Genetics and Cytogenetics in Oncology and Haematology">
    <link uri="https://atlasgeneticsoncology.org/gene/41033/JARID1A"/>
</comment>
<reference key="1">
    <citation type="journal article" date="1993" name="Oncogene">
        <title>Characterization of the retinoblastoma binding proteins RBP1 and RBP2.</title>
        <authorList>
            <person name="Fattaey A.R."/>
            <person name="Helin K."/>
            <person name="Dembski M.S."/>
            <person name="Dyson N."/>
            <person name="Harlow E."/>
            <person name="Vuocolo G.A."/>
            <person name="Hanobik M.G."/>
            <person name="Haskell K.M."/>
            <person name="Oliff A."/>
            <person name="Defeo-Jones D."/>
            <person name="Jones R.E."/>
        </authorList>
    </citation>
    <scope>NUCLEOTIDE SEQUENCE [MRNA] (ISOFORM 2)</scope>
    <scope>INTERACTION WITH RB1</scope>
</reference>
<reference key="2">
    <citation type="submission" date="2005-03" db="EMBL/GenBank/DDBJ databases">
        <title>Preparation of a set of expression-ready clones of mammalian long cDNAs encoding large proteins by the ORF trap cloning method.</title>
        <authorList>
            <person name="Nakajima D."/>
            <person name="Saito K."/>
            <person name="Yamakawa H."/>
            <person name="Kikuno R.F."/>
            <person name="Nakayama M."/>
            <person name="Ohara R."/>
            <person name="Okazaki N."/>
            <person name="Koga H."/>
            <person name="Nagase T."/>
            <person name="Ohara O."/>
        </authorList>
    </citation>
    <scope>NUCLEOTIDE SEQUENCE [LARGE SCALE MRNA] (ISOFORM 1)</scope>
</reference>
<reference key="3">
    <citation type="journal article" date="2006" name="Nature">
        <title>The finished DNA sequence of human chromosome 12.</title>
        <authorList>
            <person name="Scherer S.E."/>
            <person name="Muzny D.M."/>
            <person name="Buhay C.J."/>
            <person name="Chen R."/>
            <person name="Cree A."/>
            <person name="Ding Y."/>
            <person name="Dugan-Rocha S."/>
            <person name="Gill R."/>
            <person name="Gunaratne P."/>
            <person name="Harris R.A."/>
            <person name="Hawes A.C."/>
            <person name="Hernandez J."/>
            <person name="Hodgson A.V."/>
            <person name="Hume J."/>
            <person name="Jackson A."/>
            <person name="Khan Z.M."/>
            <person name="Kovar-Smith C."/>
            <person name="Lewis L.R."/>
            <person name="Lozado R.J."/>
            <person name="Metzker M.L."/>
            <person name="Milosavljevic A."/>
            <person name="Miner G.R."/>
            <person name="Montgomery K.T."/>
            <person name="Morgan M.B."/>
            <person name="Nazareth L.V."/>
            <person name="Scott G."/>
            <person name="Sodergren E."/>
            <person name="Song X.-Z."/>
            <person name="Steffen D."/>
            <person name="Lovering R.C."/>
            <person name="Wheeler D.A."/>
            <person name="Worley K.C."/>
            <person name="Yuan Y."/>
            <person name="Zhang Z."/>
            <person name="Adams C.Q."/>
            <person name="Ansari-Lari M.A."/>
            <person name="Ayele M."/>
            <person name="Brown M.J."/>
            <person name="Chen G."/>
            <person name="Chen Z."/>
            <person name="Clerc-Blankenburg K.P."/>
            <person name="Davis C."/>
            <person name="Delgado O."/>
            <person name="Dinh H.H."/>
            <person name="Draper H."/>
            <person name="Gonzalez-Garay M.L."/>
            <person name="Havlak P."/>
            <person name="Jackson L.R."/>
            <person name="Jacob L.S."/>
            <person name="Kelly S.H."/>
            <person name="Li L."/>
            <person name="Li Z."/>
            <person name="Liu J."/>
            <person name="Liu W."/>
            <person name="Lu J."/>
            <person name="Maheshwari M."/>
            <person name="Nguyen B.-V."/>
            <person name="Okwuonu G.O."/>
            <person name="Pasternak S."/>
            <person name="Perez L.M."/>
            <person name="Plopper F.J.H."/>
            <person name="Santibanez J."/>
            <person name="Shen H."/>
            <person name="Tabor P.E."/>
            <person name="Verduzco D."/>
            <person name="Waldron L."/>
            <person name="Wang Q."/>
            <person name="Williams G.A."/>
            <person name="Zhang J."/>
            <person name="Zhou J."/>
            <person name="Allen C.C."/>
            <person name="Amin A.G."/>
            <person name="Anyalebechi V."/>
            <person name="Bailey M."/>
            <person name="Barbaria J.A."/>
            <person name="Bimage K.E."/>
            <person name="Bryant N.P."/>
            <person name="Burch P.E."/>
            <person name="Burkett C.E."/>
            <person name="Burrell K.L."/>
            <person name="Calderon E."/>
            <person name="Cardenas V."/>
            <person name="Carter K."/>
            <person name="Casias K."/>
            <person name="Cavazos I."/>
            <person name="Cavazos S.R."/>
            <person name="Ceasar H."/>
            <person name="Chacko J."/>
            <person name="Chan S.N."/>
            <person name="Chavez D."/>
            <person name="Christopoulos C."/>
            <person name="Chu J."/>
            <person name="Cockrell R."/>
            <person name="Cox C.D."/>
            <person name="Dang M."/>
            <person name="Dathorne S.R."/>
            <person name="David R."/>
            <person name="Davis C.M."/>
            <person name="Davy-Carroll L."/>
            <person name="Deshazo D.R."/>
            <person name="Donlin J.E."/>
            <person name="D'Souza L."/>
            <person name="Eaves K.A."/>
            <person name="Egan A."/>
            <person name="Emery-Cohen A.J."/>
            <person name="Escotto M."/>
            <person name="Flagg N."/>
            <person name="Forbes L.D."/>
            <person name="Gabisi A.M."/>
            <person name="Garza M."/>
            <person name="Hamilton C."/>
            <person name="Henderson N."/>
            <person name="Hernandez O."/>
            <person name="Hines S."/>
            <person name="Hogues M.E."/>
            <person name="Huang M."/>
            <person name="Idlebird D.G."/>
            <person name="Johnson R."/>
            <person name="Jolivet A."/>
            <person name="Jones S."/>
            <person name="Kagan R."/>
            <person name="King L.M."/>
            <person name="Leal B."/>
            <person name="Lebow H."/>
            <person name="Lee S."/>
            <person name="LeVan J.M."/>
            <person name="Lewis L.C."/>
            <person name="London P."/>
            <person name="Lorensuhewa L.M."/>
            <person name="Loulseged H."/>
            <person name="Lovett D.A."/>
            <person name="Lucier A."/>
            <person name="Lucier R.L."/>
            <person name="Ma J."/>
            <person name="Madu R.C."/>
            <person name="Mapua P."/>
            <person name="Martindale A.D."/>
            <person name="Martinez E."/>
            <person name="Massey E."/>
            <person name="Mawhiney S."/>
            <person name="Meador M.G."/>
            <person name="Mendez S."/>
            <person name="Mercado C."/>
            <person name="Mercado I.C."/>
            <person name="Merritt C.E."/>
            <person name="Miner Z.L."/>
            <person name="Minja E."/>
            <person name="Mitchell T."/>
            <person name="Mohabbat F."/>
            <person name="Mohabbat K."/>
            <person name="Montgomery B."/>
            <person name="Moore N."/>
            <person name="Morris S."/>
            <person name="Munidasa M."/>
            <person name="Ngo R.N."/>
            <person name="Nguyen N.B."/>
            <person name="Nickerson E."/>
            <person name="Nwaokelemeh O.O."/>
            <person name="Nwokenkwo S."/>
            <person name="Obregon M."/>
            <person name="Oguh M."/>
            <person name="Oragunye N."/>
            <person name="Oviedo R.J."/>
            <person name="Parish B.J."/>
            <person name="Parker D.N."/>
            <person name="Parrish J."/>
            <person name="Parks K.L."/>
            <person name="Paul H.A."/>
            <person name="Payton B.A."/>
            <person name="Perez A."/>
            <person name="Perrin W."/>
            <person name="Pickens A."/>
            <person name="Primus E.L."/>
            <person name="Pu L.-L."/>
            <person name="Puazo M."/>
            <person name="Quiles M.M."/>
            <person name="Quiroz J.B."/>
            <person name="Rabata D."/>
            <person name="Reeves K."/>
            <person name="Ruiz S.J."/>
            <person name="Shao H."/>
            <person name="Sisson I."/>
            <person name="Sonaike T."/>
            <person name="Sorelle R.P."/>
            <person name="Sutton A.E."/>
            <person name="Svatek A.F."/>
            <person name="Svetz L.A."/>
            <person name="Tamerisa K.S."/>
            <person name="Taylor T.R."/>
            <person name="Teague B."/>
            <person name="Thomas N."/>
            <person name="Thorn R.D."/>
            <person name="Trejos Z.Y."/>
            <person name="Trevino B.K."/>
            <person name="Ukegbu O.N."/>
            <person name="Urban J.B."/>
            <person name="Vasquez L.I."/>
            <person name="Vera V.A."/>
            <person name="Villasana D.M."/>
            <person name="Wang L."/>
            <person name="Ward-Moore S."/>
            <person name="Warren J.T."/>
            <person name="Wei X."/>
            <person name="White F."/>
            <person name="Williamson A.L."/>
            <person name="Wleczyk R."/>
            <person name="Wooden H.S."/>
            <person name="Wooden S.H."/>
            <person name="Yen J."/>
            <person name="Yoon L."/>
            <person name="Yoon V."/>
            <person name="Zorrilla S.E."/>
            <person name="Nelson D."/>
            <person name="Kucherlapati R."/>
            <person name="Weinstock G."/>
            <person name="Gibbs R.A."/>
        </authorList>
    </citation>
    <scope>NUCLEOTIDE SEQUENCE [LARGE SCALE GENOMIC DNA]</scope>
</reference>
<reference key="4">
    <citation type="journal article" date="2004" name="Genome Res.">
        <title>The status, quality, and expansion of the NIH full-length cDNA project: the Mammalian Gene Collection (MGC).</title>
        <authorList>
            <consortium name="The MGC Project Team"/>
        </authorList>
    </citation>
    <scope>NUCLEOTIDE SEQUENCE [LARGE SCALE MRNA] OF 1-1099 (ISOFORMS 1/2)</scope>
    <source>
        <tissue>Eye</tissue>
        <tissue>Testis</tissue>
    </source>
</reference>
<reference key="5">
    <citation type="journal article" date="1991" name="Nature">
        <title>Cloning of cDNAs for cellular proteins that bind to the retinoblastoma gene product.</title>
        <authorList>
            <person name="Defeo-Jones D."/>
            <person name="Huang P.S."/>
            <person name="Jones R.E."/>
            <person name="Haskell K.M."/>
            <person name="Vuocolo G.A."/>
            <person name="Hanobik M.G."/>
            <person name="Huber H.E."/>
            <person name="Oliff A."/>
        </authorList>
    </citation>
    <scope>NUCLEOTIDE SEQUENCE [MRNA] OF 1102-1564</scope>
</reference>
<reference key="6">
    <citation type="journal article" date="1994" name="Mol. Cell. Biol.">
        <title>Differential specificity for binding of retinoblastoma binding protein 2 to RB, p107, and TATA-binding protein.</title>
        <authorList>
            <person name="Kim Y.W."/>
            <person name="Otterson G.A."/>
            <person name="Kratzke R.A."/>
            <person name="Coxon A.B."/>
            <person name="Kaye F.J."/>
        </authorList>
    </citation>
    <scope>INTERACTION WITH RB1</scope>
    <scope>SUBCELLULAR LOCATION</scope>
</reference>
<reference key="7">
    <citation type="journal article" date="1997" name="Oncogene">
        <title>T-cell oncogene rhombotin-2 interacts with retinoblastoma-binding protein 2.</title>
        <authorList>
            <person name="Mao S."/>
            <person name="Neale G.A.M."/>
            <person name="Goorha R.M."/>
        </authorList>
    </citation>
    <scope>INTERACTION WITH LMO2</scope>
</reference>
<reference key="8">
    <citation type="journal article" date="2001" name="J. Biol. Chem.">
        <title>Retinoblastoma-binding protein 2 (Rbp2) potentiates nuclear hormone receptor-mediated transcription.</title>
        <authorList>
            <person name="Chan S.W."/>
            <person name="Hong W."/>
        </authorList>
    </citation>
    <scope>FUNCTION</scope>
    <scope>INTERACTION WITH ESR1</scope>
</reference>
<reference key="9">
    <citation type="journal article" date="2005" name="Mol. Cell">
        <title>Binding of pRB to the PHD protein RBP2 promotes cellular differentiation.</title>
        <authorList>
            <person name="Benevolenskaya E.V."/>
            <person name="Murray H.L."/>
            <person name="Branton P."/>
            <person name="Young R.A."/>
            <person name="Kaelin W.G. Jr."/>
        </authorList>
    </citation>
    <scope>SUBCELLULAR LOCATION</scope>
    <scope>INTERACTION WITH RB1</scope>
    <scope>FUNCTION</scope>
</reference>
<reference key="10">
    <citation type="journal article" date="2006" name="Cell">
        <title>Global, in vivo, and site-specific phosphorylation dynamics in signaling networks.</title>
        <authorList>
            <person name="Olsen J.V."/>
            <person name="Blagoev B."/>
            <person name="Gnad F."/>
            <person name="Macek B."/>
            <person name="Kumar C."/>
            <person name="Mortensen P."/>
            <person name="Mann M."/>
        </authorList>
    </citation>
    <scope>PHOSPHORYLATION [LARGE SCALE ANALYSIS] AT SER-1598 AND SER-1603</scope>
    <scope>IDENTIFICATION BY MASS SPECTROMETRY [LARGE SCALE ANALYSIS]</scope>
    <source>
        <tissue>Cervix carcinoma</tissue>
    </source>
</reference>
<reference key="11">
    <citation type="journal article" date="2007" name="Cell">
        <title>The retinoblastoma binding protein RBP2 is an H3K4 demethylase.</title>
        <authorList>
            <person name="Klose R.J."/>
            <person name="Yan Q."/>
            <person name="Tothova Z."/>
            <person name="Yamane K."/>
            <person name="Erdjument-Bromage H."/>
            <person name="Tempst P."/>
            <person name="Gilliland D.G."/>
            <person name="Zhang Y."/>
            <person name="Kaelin W.G. Jr."/>
        </authorList>
    </citation>
    <scope>FUNCTION</scope>
</reference>
<reference key="12">
    <citation type="journal article" date="2007" name="Cell">
        <title>RBP2 belongs to a family of demethylases, specific for tri-and dimethylated lysine 4 on histone 3.</title>
        <authorList>
            <person name="Christensen J."/>
            <person name="Agger K."/>
            <person name="Cloos P.A.C."/>
            <person name="Pasini D."/>
            <person name="Rose S."/>
            <person name="Sennels L."/>
            <person name="Rappsilber J."/>
            <person name="Hansen K.H."/>
            <person name="Salcini A.E."/>
            <person name="Helin K."/>
        </authorList>
    </citation>
    <scope>FUNCTION</scope>
</reference>
<reference key="13">
    <citation type="journal article" date="2007" name="Cell">
        <title>The X-linked mental retardation gene SMCX/JARID1C defines a family of histone H3 lysine 4 demethylases.</title>
        <authorList>
            <person name="Iwase S."/>
            <person name="Lan F."/>
            <person name="Bayliss P."/>
            <person name="de la Torre-Ubieta L."/>
            <person name="Huarte M."/>
            <person name="Qi H.H."/>
            <person name="Whetstine J.R."/>
            <person name="Bonni A."/>
            <person name="Roberts T.M."/>
            <person name="Shi Y."/>
        </authorList>
    </citation>
    <scope>FUNCTION</scope>
</reference>
<reference key="14">
    <citation type="journal article" date="2007" name="Genes Dev.">
        <title>The Trithorax group protein Lid is a trimethyl histone H3K4 demethylase required for dMyc-induced cell growth.</title>
        <authorList>
            <person name="Secombe J."/>
            <person name="Li L."/>
            <person name="Carlos L."/>
            <person name="Eisenman R.N."/>
        </authorList>
    </citation>
    <scope>INTERACTION WITH MYC AND MYCN</scope>
</reference>
<reference key="15">
    <citation type="journal article" date="2008" name="Proc. Natl. Acad. Sci. U.S.A.">
        <title>A quantitative atlas of mitotic phosphorylation.</title>
        <authorList>
            <person name="Dephoure N."/>
            <person name="Zhou C."/>
            <person name="Villen J."/>
            <person name="Beausoleil S.A."/>
            <person name="Bakalarski C.E."/>
            <person name="Elledge S.J."/>
            <person name="Gygi S.P."/>
        </authorList>
    </citation>
    <scope>PHOSPHORYLATION [LARGE SCALE ANALYSIS] AT SER-1111 AND SER-1331</scope>
    <scope>IDENTIFICATION BY MASS SPECTROMETRY [LARGE SCALE ANALYSIS]</scope>
    <source>
        <tissue>Cervix carcinoma</tissue>
    </source>
</reference>
<reference key="16">
    <citation type="journal article" date="2009" name="Sci. Signal.">
        <title>Quantitative phosphoproteomic analysis of T cell receptor signaling reveals system-wide modulation of protein-protein interactions.</title>
        <authorList>
            <person name="Mayya V."/>
            <person name="Lundgren D.H."/>
            <person name="Hwang S.-I."/>
            <person name="Rezaul K."/>
            <person name="Wu L."/>
            <person name="Eng J.K."/>
            <person name="Rodionov V."/>
            <person name="Han D.K."/>
        </authorList>
    </citation>
    <scope>PHOSPHORYLATION [LARGE SCALE ANALYSIS] AT SER-1111</scope>
    <scope>IDENTIFICATION BY MASS SPECTROMETRY [LARGE SCALE ANALYSIS]</scope>
    <source>
        <tissue>Leukemic T-cell</tissue>
    </source>
</reference>
<reference key="17">
    <citation type="journal article" date="2010" name="Sci. Signal.">
        <title>Quantitative phosphoproteomics reveals widespread full phosphorylation site occupancy during mitosis.</title>
        <authorList>
            <person name="Olsen J.V."/>
            <person name="Vermeulen M."/>
            <person name="Santamaria A."/>
            <person name="Kumar C."/>
            <person name="Miller M.L."/>
            <person name="Jensen L.J."/>
            <person name="Gnad F."/>
            <person name="Cox J."/>
            <person name="Jensen T.S."/>
            <person name="Nigg E.A."/>
            <person name="Brunak S."/>
            <person name="Mann M."/>
        </authorList>
    </citation>
    <scope>PHOSPHORYLATION [LARGE SCALE ANALYSIS] AT SER-1111</scope>
    <scope>IDENTIFICATION BY MASS SPECTROMETRY [LARGE SCALE ANALYSIS]</scope>
    <source>
        <tissue>Cervix carcinoma</tissue>
    </source>
</reference>
<reference key="18">
    <citation type="journal article" date="2011" name="Science">
        <title>Histone lysine demethylase JARID1a activates CLOCK-BMAL1 and influences the circadian clock.</title>
        <authorList>
            <person name="DiTacchio L."/>
            <person name="Le H.D."/>
            <person name="Vollmers C."/>
            <person name="Hatori M."/>
            <person name="Witcher M."/>
            <person name="Secombe J."/>
            <person name="Panda S."/>
        </authorList>
    </citation>
    <scope>INTERACTION WITH BMAL1 AND CLOCK</scope>
</reference>
<reference key="19">
    <citation type="journal article" date="2013" name="J. Proteome Res.">
        <title>Toward a comprehensive characterization of a human cancer cell phosphoproteome.</title>
        <authorList>
            <person name="Zhou H."/>
            <person name="Di Palma S."/>
            <person name="Preisinger C."/>
            <person name="Peng M."/>
            <person name="Polat A.N."/>
            <person name="Heck A.J."/>
            <person name="Mohammed S."/>
        </authorList>
    </citation>
    <scope>PHOSPHORYLATION [LARGE SCALE ANALYSIS] AT SER-204; SER-1330; SER-1438; SER-1488 AND SER-1666</scope>
    <scope>IDENTIFICATION BY MASS SPECTROMETRY [LARGE SCALE ANALYSIS]</scope>
    <source>
        <tissue>Cervix carcinoma</tissue>
        <tissue>Erythroleukemia</tissue>
    </source>
</reference>
<reference key="20">
    <citation type="journal article" date="2014" name="J. Proteomics">
        <title>An enzyme assisted RP-RPLC approach for in-depth analysis of human liver phosphoproteome.</title>
        <authorList>
            <person name="Bian Y."/>
            <person name="Song C."/>
            <person name="Cheng K."/>
            <person name="Dong M."/>
            <person name="Wang F."/>
            <person name="Huang J."/>
            <person name="Sun D."/>
            <person name="Wang L."/>
            <person name="Ye M."/>
            <person name="Zou H."/>
        </authorList>
    </citation>
    <scope>PHOSPHORYLATION [LARGE SCALE ANALYSIS] AT SER-1111</scope>
    <scope>IDENTIFICATION BY MASS SPECTROMETRY [LARGE SCALE ANALYSIS]</scope>
    <source>
        <tissue>Liver</tissue>
    </source>
</reference>
<reference key="21">
    <citation type="journal article" date="2017" name="Nat. Struct. Mol. Biol.">
        <title>Site-specific mapping of the human SUMO proteome reveals co-modification with phosphorylation.</title>
        <authorList>
            <person name="Hendriks I.A."/>
            <person name="Lyon D."/>
            <person name="Young C."/>
            <person name="Jensen L.J."/>
            <person name="Vertegaal A.C."/>
            <person name="Nielsen M.L."/>
        </authorList>
    </citation>
    <scope>SUMOYLATION [LARGE SCALE ANALYSIS] AT LYS-191 AND LYS-1007</scope>
    <scope>IDENTIFICATION BY MASS SPECTROMETRY [LARGE SCALE ANALYSIS]</scope>
</reference>
<reference key="22">
    <citation type="journal article" date="2008" name="Nat. Struct. Mol. Biol.">
        <title>The ARID domain of the H3K4 demethylase RBP2 binds to a DNA CCGCCC motif.</title>
        <authorList>
            <person name="Tu S."/>
            <person name="Teng Y.C."/>
            <person name="Yuan C."/>
            <person name="Wu Y.T."/>
            <person name="Chan M.Y."/>
            <person name="Cheng A.N."/>
            <person name="Lin P.H."/>
            <person name="Juan L.J."/>
            <person name="Tsai M.D."/>
        </authorList>
    </citation>
    <scope>STRUCTURE BY NMR OF 85-175</scope>
    <scope>FUNCTION</scope>
    <scope>DOMAIN</scope>
    <scope>DNA-BINDING</scope>
    <scope>MUTAGENESIS OF ARG-112; LYS-152; SER-156 AND LEU-157</scope>
</reference>
<reference key="23">
    <citation type="journal article" date="2009" name="Nature">
        <title>Haematopoietic malignancies caused by dysregulation of a chromatin-binding PHD finger.</title>
        <authorList>
            <person name="Wang G.G."/>
            <person name="Song J."/>
            <person name="Wang Z."/>
            <person name="Dormann H.L."/>
            <person name="Casadio F."/>
            <person name="Li H."/>
            <person name="Luo J.L."/>
            <person name="Patel D.J."/>
            <person name="Allis C.D."/>
        </authorList>
    </citation>
    <scope>STRUCTURE BY NMR OF 1609-1659 IN COMPLEX WITH ZINC AND HISTONE H3</scope>
    <scope>STRUCTURE BY X-RAY CRYSTALLOGRAPHY (1.90 ANGSTROMS) OF 1609-1659 IN COMPLEX WITH ZINC AND HISTONE H3</scope>
    <scope>FUNCTION</scope>
    <scope>INTERACTION WITH HISTONE H3</scope>
    <scope>MUTAGENESIS OF VAL-1609; TRP-1625 AND 1634-GLU-TRP-1635</scope>
    <scope>DOMAIN</scope>
</reference>
<reference key="24">
    <citation type="journal article" date="2016" name="Bioorg. Med. Chem. Lett.">
        <title>Design and evaluation of 1,7-naphthyridones as novel KDM5 inhibitors.</title>
        <authorList>
            <person name="Labadie S.S."/>
            <person name="Dragovich P.S."/>
            <person name="Cummings R.T."/>
            <person name="Deshmukh G."/>
            <person name="Gustafson A."/>
            <person name="Han N."/>
            <person name="Harmange J.C."/>
            <person name="Kiefer J.R."/>
            <person name="Li Y."/>
            <person name="Liang J."/>
            <person name="Liederer B.M."/>
            <person name="Liu Y."/>
            <person name="Manieri W."/>
            <person name="Mao W."/>
            <person name="Murray L."/>
            <person name="Ortwine D.F."/>
            <person name="Trojer P."/>
            <person name="VanderPorten E."/>
            <person name="Vinogradova M."/>
            <person name="Wen L."/>
        </authorList>
    </citation>
    <scope>X-RAY CRYSTALLOGRAPHY (3.18 ANGSTROMS) OF 12-797 IN COMPLEX WITH ZINC AND NICKEL</scope>
</reference>
<reference key="25">
    <citation type="journal article" date="2016" name="Cell Chem. Biol.">
        <title>Structural Basis for KDM5A Histone Lysine Demethylase Inhibition by Diverse Compounds.</title>
        <authorList>
            <person name="Horton J.R."/>
            <person name="Liu X."/>
            <person name="Gale M."/>
            <person name="Wu L."/>
            <person name="Shanks J.R."/>
            <person name="Zhang X."/>
            <person name="Webber P.J."/>
            <person name="Bell J.S."/>
            <person name="Kales S.C."/>
            <person name="Mott B.T."/>
            <person name="Rai G."/>
            <person name="Jansen D.J."/>
            <person name="Henderson M.J."/>
            <person name="Urban D.J."/>
            <person name="Hall M.D."/>
            <person name="Simeonov A."/>
            <person name="Maloney D.J."/>
            <person name="Johns M.A."/>
            <person name="Fu H."/>
            <person name="Jadhav A."/>
            <person name="Vertino P.M."/>
            <person name="Yan Q."/>
            <person name="Cheng X."/>
        </authorList>
    </citation>
    <scope>X-RAY CRYSTALLOGRAPHY (1.39 ANGSTROMS) OF 1-87 AND 348-588 IN COMPLEX WITH INHIBITORS; MANGANESE AND 2-OXOGLUTARATE</scope>
    <scope>BIOPHYSICOCHEMICAL PROPERTIES</scope>
    <scope>FUNCTION</scope>
    <scope>MUTAGENESIS OF CYS-626 AND CYS-636</scope>
</reference>
<reference key="26">
    <citation type="journal article" date="2016" name="J. Biol. Chem.">
        <title>Characterization of a Linked Jumonji Domain of the KDM5/JARID1 Family of Histone H3 Lysine 4 Demethylases.</title>
        <authorList>
            <person name="Horton J.R."/>
            <person name="Engstrom A."/>
            <person name="Zoeller E.L."/>
            <person name="Liu X."/>
            <person name="Shanks J.R."/>
            <person name="Zhang X."/>
            <person name="Johns M.A."/>
            <person name="Vertino P.M."/>
            <person name="Fu H."/>
            <person name="Cheng X."/>
        </authorList>
    </citation>
    <scope>X-RAY CRYSTALLOGRAPHY (2.24 ANGSTROMS) OF 1-87 AND 348-588 IN COMPLEX WITH MANGANESE AND 2-OXOGLUTARATE</scope>
</reference>
<reference key="27">
    <citation type="journal article" date="2016" name="Nat. Chem. Biol.">
        <title>An inhibitor of KDM5 demethylases reduces survival of drug-tolerant cancer cells.</title>
        <authorList>
            <person name="Vinogradova M."/>
            <person name="Gehling V.S."/>
            <person name="Gustafson A."/>
            <person name="Arora S."/>
            <person name="Tindell C.A."/>
            <person name="Wilson C."/>
            <person name="Williamson K.E."/>
            <person name="Guler G.D."/>
            <person name="Gangurde P."/>
            <person name="Manieri W."/>
            <person name="Busby J."/>
            <person name="Flynn E.M."/>
            <person name="Lan F."/>
            <person name="Kim H.J."/>
            <person name="Odate S."/>
            <person name="Cochran A.G."/>
            <person name="Liu Y."/>
            <person name="Wongchenko M."/>
            <person name="Yang Y."/>
            <person name="Cheung T.K."/>
            <person name="Maile T.M."/>
            <person name="Lau T."/>
            <person name="Costa M."/>
            <person name="Hegde G.V."/>
            <person name="Jackson E."/>
            <person name="Pitti R."/>
            <person name="Arnott D."/>
            <person name="Bailey C."/>
            <person name="Bellon S."/>
            <person name="Cummings R.T."/>
            <person name="Albrecht B.K."/>
            <person name="Harmange J.C."/>
            <person name="Kiefer J.R."/>
            <person name="Trojer P."/>
            <person name="Classon M."/>
        </authorList>
    </citation>
    <scope>X-RAY CRYSTALLOGRAPHY (3.14 ANGSTROMS) OF 12-797 IN COMPLEX WITH AN INHIBITOR ZINC AND NICKEL</scope>
    <scope>ACTIVITY REGULATION</scope>
</reference>
<reference key="28">
    <citation type="journal article" date="2006" name="Genes Chromosomes Cancer">
        <title>Identification of NUP98 abnormalities in acute leukemia: JARID1A (12p13) as a new partner gene.</title>
        <authorList>
            <person name="van Zutven L.J."/>
            <person name="Onen E."/>
            <person name="Velthuizen S.C."/>
            <person name="van Drunen E."/>
            <person name="von Bergh A.R."/>
            <person name="van den Heuvel-Eibrink M.M."/>
            <person name="Veronese A."/>
            <person name="Mecucci C."/>
            <person name="Negrini M."/>
            <person name="de Greef G.E."/>
            <person name="Beverloo H.B."/>
        </authorList>
    </citation>
    <scope>DISEASE</scope>
    <scope>CHROMOSOMAL TRANSLOCATION WITH NUP98</scope>
</reference>
<reference key="29">
    <citation type="journal article" date="2013" name="Leukemia">
        <title>NUP98/JARID1A is a novel recurrent abnormality in pediatric acute megakaryoblastic leukemia with a distinct HOX gene expression pattern.</title>
        <authorList>
            <person name="de Rooij J.D."/>
            <person name="Hollink I.H."/>
            <person name="Arentsen-Peters S.T."/>
            <person name="van Galen J.F."/>
            <person name="Berna Beverloo H."/>
            <person name="Baruchel A."/>
            <person name="Trka J."/>
            <person name="Reinhardt D."/>
            <person name="Sonneveld E."/>
            <person name="Zimmermann M."/>
            <person name="Alonzo T.A."/>
            <person name="Pieters R."/>
            <person name="Meshinchi S."/>
            <person name="van den Heuvel-Eibrink M.M."/>
            <person name="Zwaan C.M."/>
        </authorList>
    </citation>
    <scope>DISEASE</scope>
    <scope>CHROMOSOMAL TRANSLOCATION WITH NUP98</scope>
</reference>
<reference key="30">
    <citation type="journal article" date="2020" name="Elife">
        <title>KDM5A mutations identified in autism spectrum disorder using forward genetics.</title>
        <authorList>
            <person name="El Hayek L."/>
            <person name="Tuncay I.O."/>
            <person name="Nijem N."/>
            <person name="Russell J."/>
            <person name="Ludwig S."/>
            <person name="Kaur K."/>
            <person name="Li X."/>
            <person name="Anderton P."/>
            <person name="Tang M."/>
            <person name="Gerard A."/>
            <person name="Heinze A."/>
            <person name="Zacher P."/>
            <person name="Alsaif H.S."/>
            <person name="Rad A."/>
            <person name="Hassanpour K."/>
            <person name="Abbaszadegan M.R."/>
            <person name="Washington C."/>
            <person name="DuPont B.R."/>
            <person name="Louie R.J."/>
            <person name="Couse M."/>
            <person name="Faden M."/>
            <person name="Rogers R.C."/>
            <person name="Abou Jamra R."/>
            <person name="Elias E.R."/>
            <person name="Maroofian R."/>
            <person name="Houlden H."/>
            <person name="Lehman A."/>
            <person name="Beutler B."/>
            <person name="Chahrour M.H."/>
        </authorList>
    </citation>
    <scope>INVOLVEMENT IN NEDEHC</scope>
    <scope>VARIANT NEDEHC VAL-477</scope>
    <scope>VARIANTS 1350-ARG--SER-1690 DEL AND LEU-1428</scope>
</reference>
<name>KDM5A_HUMAN</name>
<proteinExistence type="evidence at protein level"/>